<keyword id="KW-0002">3D-structure</keyword>
<keyword id="KW-0025">Alternative splicing</keyword>
<keyword id="KW-0067">ATP-binding</keyword>
<keyword id="KW-1003">Cell membrane</keyword>
<keyword id="KW-0219">Diabetes mellitus</keyword>
<keyword id="KW-0225">Disease variant</keyword>
<keyword id="KW-1015">Disulfide bond</keyword>
<keyword id="KW-0325">Glycoprotein</keyword>
<keyword id="KW-0460">Magnesium</keyword>
<keyword id="KW-0472">Membrane</keyword>
<keyword id="KW-0479">Metal-binding</keyword>
<keyword id="KW-0547">Nucleotide-binding</keyword>
<keyword id="KW-1267">Proteomics identification</keyword>
<keyword id="KW-0675">Receptor</keyword>
<keyword id="KW-1185">Reference proteome</keyword>
<keyword id="KW-0677">Repeat</keyword>
<keyword id="KW-0812">Transmembrane</keyword>
<keyword id="KW-1133">Transmembrane helix</keyword>
<keyword id="KW-0813">Transport</keyword>
<dbReference type="EMBL" id="HM635782">
    <property type="protein sequence ID" value="ADM67556.1"/>
    <property type="molecule type" value="mRNA"/>
</dbReference>
<dbReference type="EMBL" id="L78207">
    <property type="protein sequence ID" value="AAB02278.1"/>
    <property type="molecule type" value="mRNA"/>
</dbReference>
<dbReference type="EMBL" id="L78243">
    <property type="protein sequence ID" value="AAB02417.1"/>
    <property type="molecule type" value="Genomic_DNA"/>
</dbReference>
<dbReference type="EMBL" id="L78208">
    <property type="protein sequence ID" value="AAB02417.1"/>
    <property type="status" value="JOINED"/>
    <property type="molecule type" value="Genomic_DNA"/>
</dbReference>
<dbReference type="EMBL" id="L78209">
    <property type="protein sequence ID" value="AAB02417.1"/>
    <property type="status" value="JOINED"/>
    <property type="molecule type" value="Genomic_DNA"/>
</dbReference>
<dbReference type="EMBL" id="L78210">
    <property type="protein sequence ID" value="AAB02417.1"/>
    <property type="status" value="JOINED"/>
    <property type="molecule type" value="Genomic_DNA"/>
</dbReference>
<dbReference type="EMBL" id="L78211">
    <property type="protein sequence ID" value="AAB02417.1"/>
    <property type="status" value="JOINED"/>
    <property type="molecule type" value="Genomic_DNA"/>
</dbReference>
<dbReference type="EMBL" id="L78212">
    <property type="protein sequence ID" value="AAB02417.1"/>
    <property type="status" value="JOINED"/>
    <property type="molecule type" value="Genomic_DNA"/>
</dbReference>
<dbReference type="EMBL" id="L78255">
    <property type="protein sequence ID" value="AAB02417.1"/>
    <property type="status" value="JOINED"/>
    <property type="molecule type" value="Genomic_DNA"/>
</dbReference>
<dbReference type="EMBL" id="L78213">
    <property type="protein sequence ID" value="AAB02417.1"/>
    <property type="status" value="JOINED"/>
    <property type="molecule type" value="Genomic_DNA"/>
</dbReference>
<dbReference type="EMBL" id="L78214">
    <property type="protein sequence ID" value="AAB02417.1"/>
    <property type="status" value="JOINED"/>
    <property type="molecule type" value="Genomic_DNA"/>
</dbReference>
<dbReference type="EMBL" id="L78215">
    <property type="protein sequence ID" value="AAB02417.1"/>
    <property type="status" value="JOINED"/>
    <property type="molecule type" value="Genomic_DNA"/>
</dbReference>
<dbReference type="EMBL" id="L78216">
    <property type="protein sequence ID" value="AAB02417.1"/>
    <property type="status" value="JOINED"/>
    <property type="molecule type" value="Genomic_DNA"/>
</dbReference>
<dbReference type="EMBL" id="L78217">
    <property type="protein sequence ID" value="AAB02417.1"/>
    <property type="status" value="JOINED"/>
    <property type="molecule type" value="Genomic_DNA"/>
</dbReference>
<dbReference type="EMBL" id="L78218">
    <property type="protein sequence ID" value="AAB02417.1"/>
    <property type="status" value="JOINED"/>
    <property type="molecule type" value="Genomic_DNA"/>
</dbReference>
<dbReference type="EMBL" id="L78219">
    <property type="protein sequence ID" value="AAB02417.1"/>
    <property type="status" value="JOINED"/>
    <property type="molecule type" value="Genomic_DNA"/>
</dbReference>
<dbReference type="EMBL" id="L78220">
    <property type="protein sequence ID" value="AAB02417.1"/>
    <property type="status" value="JOINED"/>
    <property type="molecule type" value="Genomic_DNA"/>
</dbReference>
<dbReference type="EMBL" id="L78221">
    <property type="protein sequence ID" value="AAB02417.1"/>
    <property type="status" value="JOINED"/>
    <property type="molecule type" value="Genomic_DNA"/>
</dbReference>
<dbReference type="EMBL" id="L78222">
    <property type="protein sequence ID" value="AAB02417.1"/>
    <property type="status" value="JOINED"/>
    <property type="molecule type" value="Genomic_DNA"/>
</dbReference>
<dbReference type="EMBL" id="L78223">
    <property type="protein sequence ID" value="AAB02417.1"/>
    <property type="status" value="JOINED"/>
    <property type="molecule type" value="Genomic_DNA"/>
</dbReference>
<dbReference type="EMBL" id="L78225">
    <property type="protein sequence ID" value="AAB02417.1"/>
    <property type="status" value="JOINED"/>
    <property type="molecule type" value="Genomic_DNA"/>
</dbReference>
<dbReference type="EMBL" id="L78254">
    <property type="protein sequence ID" value="AAB02417.1"/>
    <property type="status" value="JOINED"/>
    <property type="molecule type" value="Genomic_DNA"/>
</dbReference>
<dbReference type="EMBL" id="L78226">
    <property type="protein sequence ID" value="AAB02417.1"/>
    <property type="status" value="JOINED"/>
    <property type="molecule type" value="Genomic_DNA"/>
</dbReference>
<dbReference type="EMBL" id="L78227">
    <property type="protein sequence ID" value="AAB02417.1"/>
    <property type="status" value="JOINED"/>
    <property type="molecule type" value="Genomic_DNA"/>
</dbReference>
<dbReference type="EMBL" id="L78228">
    <property type="protein sequence ID" value="AAB02417.1"/>
    <property type="status" value="JOINED"/>
    <property type="molecule type" value="Genomic_DNA"/>
</dbReference>
<dbReference type="EMBL" id="L78229">
    <property type="protein sequence ID" value="AAB02417.1"/>
    <property type="status" value="JOINED"/>
    <property type="molecule type" value="Genomic_DNA"/>
</dbReference>
<dbReference type="EMBL" id="L78230">
    <property type="protein sequence ID" value="AAB02417.1"/>
    <property type="status" value="JOINED"/>
    <property type="molecule type" value="Genomic_DNA"/>
</dbReference>
<dbReference type="EMBL" id="L78231">
    <property type="protein sequence ID" value="AAB02417.1"/>
    <property type="status" value="JOINED"/>
    <property type="molecule type" value="Genomic_DNA"/>
</dbReference>
<dbReference type="EMBL" id="L78232">
    <property type="protein sequence ID" value="AAB02417.1"/>
    <property type="status" value="JOINED"/>
    <property type="molecule type" value="Genomic_DNA"/>
</dbReference>
<dbReference type="EMBL" id="L78233">
    <property type="protein sequence ID" value="AAB02417.1"/>
    <property type="status" value="JOINED"/>
    <property type="molecule type" value="Genomic_DNA"/>
</dbReference>
<dbReference type="EMBL" id="L78234">
    <property type="protein sequence ID" value="AAB02417.1"/>
    <property type="status" value="JOINED"/>
    <property type="molecule type" value="Genomic_DNA"/>
</dbReference>
<dbReference type="EMBL" id="L78235">
    <property type="protein sequence ID" value="AAB02417.1"/>
    <property type="status" value="JOINED"/>
    <property type="molecule type" value="Genomic_DNA"/>
</dbReference>
<dbReference type="EMBL" id="L78236">
    <property type="protein sequence ID" value="AAB02417.1"/>
    <property type="status" value="JOINED"/>
    <property type="molecule type" value="Genomic_DNA"/>
</dbReference>
<dbReference type="EMBL" id="L78237">
    <property type="protein sequence ID" value="AAB02417.1"/>
    <property type="status" value="JOINED"/>
    <property type="molecule type" value="Genomic_DNA"/>
</dbReference>
<dbReference type="EMBL" id="L78238">
    <property type="protein sequence ID" value="AAB02417.1"/>
    <property type="status" value="JOINED"/>
    <property type="molecule type" value="Genomic_DNA"/>
</dbReference>
<dbReference type="EMBL" id="L78239">
    <property type="protein sequence ID" value="AAB02417.1"/>
    <property type="status" value="JOINED"/>
    <property type="molecule type" value="Genomic_DNA"/>
</dbReference>
<dbReference type="EMBL" id="L78240">
    <property type="protein sequence ID" value="AAB02417.1"/>
    <property type="status" value="JOINED"/>
    <property type="molecule type" value="Genomic_DNA"/>
</dbReference>
<dbReference type="EMBL" id="L78241">
    <property type="protein sequence ID" value="AAB02417.1"/>
    <property type="status" value="JOINED"/>
    <property type="molecule type" value="Genomic_DNA"/>
</dbReference>
<dbReference type="EMBL" id="L78242">
    <property type="protein sequence ID" value="AAB02417.1"/>
    <property type="status" value="JOINED"/>
    <property type="molecule type" value="Genomic_DNA"/>
</dbReference>
<dbReference type="EMBL" id="L78243">
    <property type="protein sequence ID" value="AAB02418.1"/>
    <property type="molecule type" value="Genomic_DNA"/>
</dbReference>
<dbReference type="EMBL" id="L78208">
    <property type="protein sequence ID" value="AAB02418.1"/>
    <property type="status" value="JOINED"/>
    <property type="molecule type" value="Genomic_DNA"/>
</dbReference>
<dbReference type="EMBL" id="L78209">
    <property type="protein sequence ID" value="AAB02418.1"/>
    <property type="status" value="JOINED"/>
    <property type="molecule type" value="Genomic_DNA"/>
</dbReference>
<dbReference type="EMBL" id="L78210">
    <property type="protein sequence ID" value="AAB02418.1"/>
    <property type="status" value="JOINED"/>
    <property type="molecule type" value="Genomic_DNA"/>
</dbReference>
<dbReference type="EMBL" id="L78211">
    <property type="protein sequence ID" value="AAB02418.1"/>
    <property type="status" value="JOINED"/>
    <property type="molecule type" value="Genomic_DNA"/>
</dbReference>
<dbReference type="EMBL" id="L78212">
    <property type="protein sequence ID" value="AAB02418.1"/>
    <property type="status" value="JOINED"/>
    <property type="molecule type" value="Genomic_DNA"/>
</dbReference>
<dbReference type="EMBL" id="L78255">
    <property type="protein sequence ID" value="AAB02418.1"/>
    <property type="status" value="JOINED"/>
    <property type="molecule type" value="Genomic_DNA"/>
</dbReference>
<dbReference type="EMBL" id="L78213">
    <property type="protein sequence ID" value="AAB02418.1"/>
    <property type="status" value="JOINED"/>
    <property type="molecule type" value="Genomic_DNA"/>
</dbReference>
<dbReference type="EMBL" id="L78214">
    <property type="protein sequence ID" value="AAB02418.1"/>
    <property type="status" value="JOINED"/>
    <property type="molecule type" value="Genomic_DNA"/>
</dbReference>
<dbReference type="EMBL" id="L78215">
    <property type="protein sequence ID" value="AAB02418.1"/>
    <property type="status" value="JOINED"/>
    <property type="molecule type" value="Genomic_DNA"/>
</dbReference>
<dbReference type="EMBL" id="L78216">
    <property type="protein sequence ID" value="AAB02418.1"/>
    <property type="status" value="JOINED"/>
    <property type="molecule type" value="Genomic_DNA"/>
</dbReference>
<dbReference type="EMBL" id="L78217">
    <property type="protein sequence ID" value="AAB02418.1"/>
    <property type="status" value="JOINED"/>
    <property type="molecule type" value="Genomic_DNA"/>
</dbReference>
<dbReference type="EMBL" id="L78218">
    <property type="protein sequence ID" value="AAB02418.1"/>
    <property type="status" value="JOINED"/>
    <property type="molecule type" value="Genomic_DNA"/>
</dbReference>
<dbReference type="EMBL" id="L78219">
    <property type="protein sequence ID" value="AAB02418.1"/>
    <property type="status" value="JOINED"/>
    <property type="molecule type" value="Genomic_DNA"/>
</dbReference>
<dbReference type="EMBL" id="L78220">
    <property type="protein sequence ID" value="AAB02418.1"/>
    <property type="status" value="JOINED"/>
    <property type="molecule type" value="Genomic_DNA"/>
</dbReference>
<dbReference type="EMBL" id="L78221">
    <property type="protein sequence ID" value="AAB02418.1"/>
    <property type="status" value="JOINED"/>
    <property type="molecule type" value="Genomic_DNA"/>
</dbReference>
<dbReference type="EMBL" id="L78222">
    <property type="protein sequence ID" value="AAB02418.1"/>
    <property type="status" value="JOINED"/>
    <property type="molecule type" value="Genomic_DNA"/>
</dbReference>
<dbReference type="EMBL" id="L78224">
    <property type="protein sequence ID" value="AAB02418.1"/>
    <property type="status" value="JOINED"/>
    <property type="molecule type" value="Genomic_DNA"/>
</dbReference>
<dbReference type="EMBL" id="L78225">
    <property type="protein sequence ID" value="AAB02418.1"/>
    <property type="status" value="JOINED"/>
    <property type="molecule type" value="Genomic_DNA"/>
</dbReference>
<dbReference type="EMBL" id="L78254">
    <property type="protein sequence ID" value="AAB02418.1"/>
    <property type="status" value="JOINED"/>
    <property type="molecule type" value="Genomic_DNA"/>
</dbReference>
<dbReference type="EMBL" id="L78226">
    <property type="protein sequence ID" value="AAB02418.1"/>
    <property type="status" value="JOINED"/>
    <property type="molecule type" value="Genomic_DNA"/>
</dbReference>
<dbReference type="EMBL" id="L78227">
    <property type="protein sequence ID" value="AAB02418.1"/>
    <property type="status" value="JOINED"/>
    <property type="molecule type" value="Genomic_DNA"/>
</dbReference>
<dbReference type="EMBL" id="L78228">
    <property type="protein sequence ID" value="AAB02418.1"/>
    <property type="status" value="JOINED"/>
    <property type="molecule type" value="Genomic_DNA"/>
</dbReference>
<dbReference type="EMBL" id="L78229">
    <property type="protein sequence ID" value="AAB02418.1"/>
    <property type="status" value="JOINED"/>
    <property type="molecule type" value="Genomic_DNA"/>
</dbReference>
<dbReference type="EMBL" id="L78230">
    <property type="protein sequence ID" value="AAB02418.1"/>
    <property type="status" value="JOINED"/>
    <property type="molecule type" value="Genomic_DNA"/>
</dbReference>
<dbReference type="EMBL" id="L78231">
    <property type="protein sequence ID" value="AAB02418.1"/>
    <property type="status" value="JOINED"/>
    <property type="molecule type" value="Genomic_DNA"/>
</dbReference>
<dbReference type="EMBL" id="L78232">
    <property type="protein sequence ID" value="AAB02418.1"/>
    <property type="status" value="JOINED"/>
    <property type="molecule type" value="Genomic_DNA"/>
</dbReference>
<dbReference type="EMBL" id="L78233">
    <property type="protein sequence ID" value="AAB02418.1"/>
    <property type="status" value="JOINED"/>
    <property type="molecule type" value="Genomic_DNA"/>
</dbReference>
<dbReference type="EMBL" id="L78234">
    <property type="protein sequence ID" value="AAB02418.1"/>
    <property type="status" value="JOINED"/>
    <property type="molecule type" value="Genomic_DNA"/>
</dbReference>
<dbReference type="EMBL" id="L78235">
    <property type="protein sequence ID" value="AAB02418.1"/>
    <property type="status" value="JOINED"/>
    <property type="molecule type" value="Genomic_DNA"/>
</dbReference>
<dbReference type="EMBL" id="L78236">
    <property type="protein sequence ID" value="AAB02418.1"/>
    <property type="status" value="JOINED"/>
    <property type="molecule type" value="Genomic_DNA"/>
</dbReference>
<dbReference type="EMBL" id="L78237">
    <property type="protein sequence ID" value="AAB02418.1"/>
    <property type="status" value="JOINED"/>
    <property type="molecule type" value="Genomic_DNA"/>
</dbReference>
<dbReference type="EMBL" id="L78238">
    <property type="protein sequence ID" value="AAB02418.1"/>
    <property type="status" value="JOINED"/>
    <property type="molecule type" value="Genomic_DNA"/>
</dbReference>
<dbReference type="EMBL" id="L78239">
    <property type="protein sequence ID" value="AAB02418.1"/>
    <property type="status" value="JOINED"/>
    <property type="molecule type" value="Genomic_DNA"/>
</dbReference>
<dbReference type="EMBL" id="L78240">
    <property type="protein sequence ID" value="AAB02418.1"/>
    <property type="status" value="JOINED"/>
    <property type="molecule type" value="Genomic_DNA"/>
</dbReference>
<dbReference type="EMBL" id="L78241">
    <property type="protein sequence ID" value="AAB02418.1"/>
    <property type="status" value="JOINED"/>
    <property type="molecule type" value="Genomic_DNA"/>
</dbReference>
<dbReference type="EMBL" id="L78242">
    <property type="protein sequence ID" value="AAB02418.1"/>
    <property type="status" value="JOINED"/>
    <property type="molecule type" value="Genomic_DNA"/>
</dbReference>
<dbReference type="EMBL" id="U63421">
    <property type="protein sequence ID" value="AAB36699.1"/>
    <property type="molecule type" value="mRNA"/>
</dbReference>
<dbReference type="EMBL" id="U63455">
    <property type="protein sequence ID" value="AAB36700.1"/>
    <property type="molecule type" value="Genomic_DNA"/>
</dbReference>
<dbReference type="EMBL" id="U63422">
    <property type="protein sequence ID" value="AAB36700.1"/>
    <property type="status" value="JOINED"/>
    <property type="molecule type" value="Genomic_DNA"/>
</dbReference>
<dbReference type="EMBL" id="U63423">
    <property type="protein sequence ID" value="AAB36700.1"/>
    <property type="status" value="JOINED"/>
    <property type="molecule type" value="Genomic_DNA"/>
</dbReference>
<dbReference type="EMBL" id="U63424">
    <property type="protein sequence ID" value="AAB36700.1"/>
    <property type="status" value="JOINED"/>
    <property type="molecule type" value="Genomic_DNA"/>
</dbReference>
<dbReference type="EMBL" id="U63425">
    <property type="protein sequence ID" value="AAB36700.1"/>
    <property type="status" value="JOINED"/>
    <property type="molecule type" value="Genomic_DNA"/>
</dbReference>
<dbReference type="EMBL" id="U63426">
    <property type="protein sequence ID" value="AAB36700.1"/>
    <property type="status" value="JOINED"/>
    <property type="molecule type" value="Genomic_DNA"/>
</dbReference>
<dbReference type="EMBL" id="U63427">
    <property type="protein sequence ID" value="AAB36700.1"/>
    <property type="status" value="JOINED"/>
    <property type="molecule type" value="Genomic_DNA"/>
</dbReference>
<dbReference type="EMBL" id="U63428">
    <property type="protein sequence ID" value="AAB36700.1"/>
    <property type="status" value="JOINED"/>
    <property type="molecule type" value="Genomic_DNA"/>
</dbReference>
<dbReference type="EMBL" id="U63429">
    <property type="protein sequence ID" value="AAB36700.1"/>
    <property type="status" value="JOINED"/>
    <property type="molecule type" value="Genomic_DNA"/>
</dbReference>
<dbReference type="EMBL" id="U63430">
    <property type="protein sequence ID" value="AAB36700.1"/>
    <property type="status" value="JOINED"/>
    <property type="molecule type" value="Genomic_DNA"/>
</dbReference>
<dbReference type="EMBL" id="U63431">
    <property type="protein sequence ID" value="AAB36700.1"/>
    <property type="status" value="JOINED"/>
    <property type="molecule type" value="Genomic_DNA"/>
</dbReference>
<dbReference type="EMBL" id="U63432">
    <property type="protein sequence ID" value="AAB36700.1"/>
    <property type="status" value="JOINED"/>
    <property type="molecule type" value="Genomic_DNA"/>
</dbReference>
<dbReference type="EMBL" id="U63433">
    <property type="protein sequence ID" value="AAB36700.1"/>
    <property type="status" value="JOINED"/>
    <property type="molecule type" value="Genomic_DNA"/>
</dbReference>
<dbReference type="EMBL" id="U63434">
    <property type="protein sequence ID" value="AAB36700.1"/>
    <property type="status" value="JOINED"/>
    <property type="molecule type" value="Genomic_DNA"/>
</dbReference>
<dbReference type="EMBL" id="U63435">
    <property type="protein sequence ID" value="AAB36700.1"/>
    <property type="status" value="JOINED"/>
    <property type="molecule type" value="Genomic_DNA"/>
</dbReference>
<dbReference type="EMBL" id="U63436">
    <property type="protein sequence ID" value="AAB36700.1"/>
    <property type="status" value="JOINED"/>
    <property type="molecule type" value="Genomic_DNA"/>
</dbReference>
<dbReference type="EMBL" id="U63437">
    <property type="protein sequence ID" value="AAB36700.1"/>
    <property type="status" value="JOINED"/>
    <property type="molecule type" value="Genomic_DNA"/>
</dbReference>
<dbReference type="EMBL" id="U63438">
    <property type="protein sequence ID" value="AAB36700.1"/>
    <property type="status" value="JOINED"/>
    <property type="molecule type" value="Genomic_DNA"/>
</dbReference>
<dbReference type="EMBL" id="U63439">
    <property type="protein sequence ID" value="AAB36700.1"/>
    <property type="status" value="JOINED"/>
    <property type="molecule type" value="Genomic_DNA"/>
</dbReference>
<dbReference type="EMBL" id="U63441">
    <property type="protein sequence ID" value="AAB36700.1"/>
    <property type="status" value="JOINED"/>
    <property type="molecule type" value="Genomic_DNA"/>
</dbReference>
<dbReference type="EMBL" id="U63442">
    <property type="protein sequence ID" value="AAB36700.1"/>
    <property type="status" value="JOINED"/>
    <property type="molecule type" value="Genomic_DNA"/>
</dbReference>
<dbReference type="EMBL" id="U63443">
    <property type="protein sequence ID" value="AAB36700.1"/>
    <property type="status" value="JOINED"/>
    <property type="molecule type" value="Genomic_DNA"/>
</dbReference>
<dbReference type="EMBL" id="U63444">
    <property type="protein sequence ID" value="AAB36700.1"/>
    <property type="status" value="JOINED"/>
    <property type="molecule type" value="Genomic_DNA"/>
</dbReference>
<dbReference type="EMBL" id="U63445">
    <property type="protein sequence ID" value="AAB36700.1"/>
    <property type="status" value="JOINED"/>
    <property type="molecule type" value="Genomic_DNA"/>
</dbReference>
<dbReference type="EMBL" id="U63446">
    <property type="protein sequence ID" value="AAB36700.1"/>
    <property type="status" value="JOINED"/>
    <property type="molecule type" value="Genomic_DNA"/>
</dbReference>
<dbReference type="EMBL" id="U63447">
    <property type="protein sequence ID" value="AAB36700.1"/>
    <property type="status" value="JOINED"/>
    <property type="molecule type" value="Genomic_DNA"/>
</dbReference>
<dbReference type="EMBL" id="U63448">
    <property type="protein sequence ID" value="AAB36700.1"/>
    <property type="status" value="JOINED"/>
    <property type="molecule type" value="Genomic_DNA"/>
</dbReference>
<dbReference type="EMBL" id="U63449">
    <property type="protein sequence ID" value="AAB36700.1"/>
    <property type="status" value="JOINED"/>
    <property type="molecule type" value="Genomic_DNA"/>
</dbReference>
<dbReference type="EMBL" id="U63450">
    <property type="protein sequence ID" value="AAB36700.1"/>
    <property type="status" value="JOINED"/>
    <property type="molecule type" value="Genomic_DNA"/>
</dbReference>
<dbReference type="EMBL" id="U63451">
    <property type="protein sequence ID" value="AAB36700.1"/>
    <property type="status" value="JOINED"/>
    <property type="molecule type" value="Genomic_DNA"/>
</dbReference>
<dbReference type="EMBL" id="U63452">
    <property type="protein sequence ID" value="AAB36700.1"/>
    <property type="status" value="JOINED"/>
    <property type="molecule type" value="Genomic_DNA"/>
</dbReference>
<dbReference type="EMBL" id="U63453">
    <property type="protein sequence ID" value="AAB36700.1"/>
    <property type="status" value="JOINED"/>
    <property type="molecule type" value="Genomic_DNA"/>
</dbReference>
<dbReference type="EMBL" id="U63454">
    <property type="protein sequence ID" value="AAB36700.1"/>
    <property type="status" value="JOINED"/>
    <property type="molecule type" value="Genomic_DNA"/>
</dbReference>
<dbReference type="EMBL" id="AF087138">
    <property type="protein sequence ID" value="AAC36724.1"/>
    <property type="molecule type" value="mRNA"/>
</dbReference>
<dbReference type="EMBL" id="AC124798">
    <property type="status" value="NOT_ANNOTATED_CDS"/>
    <property type="molecule type" value="Genomic_DNA"/>
</dbReference>
<dbReference type="EMBL" id="L40625">
    <property type="protein sequence ID" value="AAA99227.1"/>
    <property type="molecule type" value="mRNA"/>
</dbReference>
<dbReference type="CCDS" id="CCDS31437.1">
    <molecule id="Q09428-1"/>
</dbReference>
<dbReference type="CCDS" id="CCDS73264.1">
    <molecule id="Q09428-2"/>
</dbReference>
<dbReference type="RefSeq" id="NP_000343.2">
    <molecule id="Q09428-1"/>
    <property type="nucleotide sequence ID" value="NM_000352.6"/>
</dbReference>
<dbReference type="RefSeq" id="NP_001274103.1">
    <molecule id="Q09428-2"/>
    <property type="nucleotide sequence ID" value="NM_001287174.3"/>
</dbReference>
<dbReference type="PDB" id="6C3O">
    <property type="method" value="EM"/>
    <property type="resolution" value="3.90 A"/>
    <property type="chains" value="E/F/G/H=1-1581"/>
</dbReference>
<dbReference type="PDB" id="6C3P">
    <property type="method" value="EM"/>
    <property type="resolution" value="5.60 A"/>
    <property type="chains" value="E/F/G/H=1-1581"/>
</dbReference>
<dbReference type="PDB" id="7S5V">
    <property type="method" value="EM"/>
    <property type="resolution" value="3.30 A"/>
    <property type="chains" value="E=2-1581"/>
</dbReference>
<dbReference type="PDB" id="7S5X">
    <property type="method" value="EM"/>
    <property type="resolution" value="3.70 A"/>
    <property type="chains" value="E=2-1581"/>
</dbReference>
<dbReference type="PDB" id="7S5Y">
    <property type="method" value="EM"/>
    <property type="resolution" value="3.90 A"/>
    <property type="chains" value="E=2-1581"/>
</dbReference>
<dbReference type="PDB" id="7S5Z">
    <property type="method" value="EM"/>
    <property type="resolution" value="3.90 A"/>
    <property type="chains" value="E=2-1581"/>
</dbReference>
<dbReference type="PDB" id="7S60">
    <property type="method" value="EM"/>
    <property type="resolution" value="3.70 A"/>
    <property type="chains" value="E=2-1581"/>
</dbReference>
<dbReference type="PDB" id="7S61">
    <property type="method" value="EM"/>
    <property type="resolution" value="4.00 A"/>
    <property type="chains" value="E=2-1581"/>
</dbReference>
<dbReference type="PDBsum" id="6C3O"/>
<dbReference type="PDBsum" id="6C3P"/>
<dbReference type="PDBsum" id="7S5V"/>
<dbReference type="PDBsum" id="7S5X"/>
<dbReference type="PDBsum" id="7S5Y"/>
<dbReference type="PDBsum" id="7S5Z"/>
<dbReference type="PDBsum" id="7S60"/>
<dbReference type="PDBsum" id="7S61"/>
<dbReference type="EMDB" id="EMD-24840"/>
<dbReference type="EMDB" id="EMD-24842"/>
<dbReference type="EMDB" id="EMD-24843"/>
<dbReference type="EMDB" id="EMD-24844"/>
<dbReference type="EMDB" id="EMD-24845"/>
<dbReference type="EMDB" id="EMD-24846"/>
<dbReference type="EMDB" id="EMD-7338"/>
<dbReference type="EMDB" id="EMD-7339"/>
<dbReference type="SMR" id="Q09428"/>
<dbReference type="BioGRID" id="112700">
    <property type="interactions" value="10"/>
</dbReference>
<dbReference type="ComplexPortal" id="CPX-195">
    <property type="entry name" value="Inward rectifying potassium channel complex, Kir6.2-SUR1"/>
</dbReference>
<dbReference type="CORUM" id="Q09428"/>
<dbReference type="DIP" id="DIP-58642N"/>
<dbReference type="ELM" id="Q09428"/>
<dbReference type="FunCoup" id="Q09428">
    <property type="interactions" value="63"/>
</dbReference>
<dbReference type="IntAct" id="Q09428">
    <property type="interactions" value="7"/>
</dbReference>
<dbReference type="MINT" id="Q09428"/>
<dbReference type="STRING" id="9606.ENSP00000494321"/>
<dbReference type="BindingDB" id="Q09428"/>
<dbReference type="ChEMBL" id="CHEMBL2071"/>
<dbReference type="DrugBank" id="DB00414">
    <property type="generic name" value="Acetohexamide"/>
</dbReference>
<dbReference type="DrugBank" id="DB00171">
    <property type="generic name" value="ATP"/>
</dbReference>
<dbReference type="DrugBank" id="DB00672">
    <property type="generic name" value="Chlorpropamide"/>
</dbReference>
<dbReference type="DrugBank" id="DB01120">
    <property type="generic name" value="Gliclazide"/>
</dbReference>
<dbReference type="DrugBank" id="DB00222">
    <property type="generic name" value="Glimepiride"/>
</dbReference>
<dbReference type="DrugBank" id="DB01067">
    <property type="generic name" value="Glipizide"/>
</dbReference>
<dbReference type="DrugBank" id="DB01251">
    <property type="generic name" value="Gliquidone"/>
</dbReference>
<dbReference type="DrugBank" id="DB01016">
    <property type="generic name" value="Glyburide"/>
</dbReference>
<dbReference type="DrugBank" id="DB01382">
    <property type="generic name" value="Glymidine"/>
</dbReference>
<dbReference type="DrugBank" id="DB01252">
    <property type="generic name" value="Mitiglinide"/>
</dbReference>
<dbReference type="DrugBank" id="DB00731">
    <property type="generic name" value="Nateglinide"/>
</dbReference>
<dbReference type="DrugBank" id="DB00912">
    <property type="generic name" value="Repaglinide"/>
</dbReference>
<dbReference type="DrugBank" id="DB00839">
    <property type="generic name" value="Tolazamide"/>
</dbReference>
<dbReference type="DrugBank" id="DB01124">
    <property type="generic name" value="Tolbutamide"/>
</dbReference>
<dbReference type="DrugCentral" id="Q09428"/>
<dbReference type="GuidetoPHARMACOLOGY" id="2594"/>
<dbReference type="TCDB" id="3.A.1.208.4">
    <property type="family name" value="the atp-binding cassette (abc) superfamily"/>
</dbReference>
<dbReference type="GlyCosmos" id="Q09428">
    <property type="glycosylation" value="2 sites, No reported glycans"/>
</dbReference>
<dbReference type="GlyGen" id="Q09428">
    <property type="glycosylation" value="2 sites, 1 N-linked glycan (1 site)"/>
</dbReference>
<dbReference type="iPTMnet" id="Q09428"/>
<dbReference type="PhosphoSitePlus" id="Q09428"/>
<dbReference type="BioMuta" id="ABCC8"/>
<dbReference type="DMDM" id="311033501"/>
<dbReference type="jPOST" id="Q09428"/>
<dbReference type="MassIVE" id="Q09428"/>
<dbReference type="PaxDb" id="9606-ENSP00000303960"/>
<dbReference type="PeptideAtlas" id="Q09428"/>
<dbReference type="ProteomicsDB" id="58720">
    <molecule id="Q09428-1"/>
</dbReference>
<dbReference type="ProteomicsDB" id="58721">
    <molecule id="Q09428-2"/>
</dbReference>
<dbReference type="Antibodypedia" id="24846">
    <property type="antibodies" value="321 antibodies from 36 providers"/>
</dbReference>
<dbReference type="DNASU" id="6833"/>
<dbReference type="Ensembl" id="ENST00000302539.9">
    <molecule id="Q09428-2"/>
    <property type="protein sequence ID" value="ENSP00000303960.4"/>
    <property type="gene ID" value="ENSG00000006071.16"/>
</dbReference>
<dbReference type="Ensembl" id="ENST00000389817.8">
    <molecule id="Q09428-1"/>
    <property type="protein sequence ID" value="ENSP00000374467.4"/>
    <property type="gene ID" value="ENSG00000006071.16"/>
</dbReference>
<dbReference type="Ensembl" id="ENST00000644542.1">
    <molecule id="Q09428-3"/>
    <property type="protein sequence ID" value="ENSP00000495532.1"/>
    <property type="gene ID" value="ENSG00000006071.16"/>
</dbReference>
<dbReference type="Ensembl" id="ENST00000684593.1">
    <molecule id="Q09428-3"/>
    <property type="protein sequence ID" value="ENSP00000507005.1"/>
    <property type="gene ID" value="ENSG00000006071.16"/>
</dbReference>
<dbReference type="GeneID" id="6833"/>
<dbReference type="KEGG" id="hsa:6833"/>
<dbReference type="MANE-Select" id="ENST00000389817.8">
    <property type="protein sequence ID" value="ENSP00000374467.4"/>
    <property type="RefSeq nucleotide sequence ID" value="NM_000352.6"/>
    <property type="RefSeq protein sequence ID" value="NP_000343.2"/>
</dbReference>
<dbReference type="UCSC" id="uc001mnc.4">
    <molecule id="Q09428-1"/>
    <property type="organism name" value="human"/>
</dbReference>
<dbReference type="AGR" id="HGNC:59"/>
<dbReference type="CTD" id="6833"/>
<dbReference type="DisGeNET" id="6833"/>
<dbReference type="GeneCards" id="ABCC8"/>
<dbReference type="GeneReviews" id="ABCC8"/>
<dbReference type="HGNC" id="HGNC:59">
    <property type="gene designation" value="ABCC8"/>
</dbReference>
<dbReference type="HPA" id="ENSG00000006071">
    <property type="expression patterns" value="Group enriched (pancreas, pituitary gland)"/>
</dbReference>
<dbReference type="MalaCards" id="ABCC8"/>
<dbReference type="MIM" id="240800">
    <property type="type" value="phenotype"/>
</dbReference>
<dbReference type="MIM" id="256450">
    <property type="type" value="phenotype"/>
</dbReference>
<dbReference type="MIM" id="600509">
    <property type="type" value="gene"/>
</dbReference>
<dbReference type="MIM" id="602485">
    <property type="type" value="phenotype"/>
</dbReference>
<dbReference type="MIM" id="610374">
    <property type="type" value="phenotype"/>
</dbReference>
<dbReference type="MIM" id="618857">
    <property type="type" value="phenotype"/>
</dbReference>
<dbReference type="neXtProt" id="NX_Q09428"/>
<dbReference type="OpenTargets" id="ENSG00000006071"/>
<dbReference type="Orphanet" id="276575">
    <property type="disease" value="Autosomal dominant hyperinsulinism due to SUR1 deficiency"/>
</dbReference>
<dbReference type="Orphanet" id="79643">
    <property type="disease" value="Autosomal recessive hyperinsulinism due to SUR1 deficiency"/>
</dbReference>
<dbReference type="Orphanet" id="79134">
    <property type="disease" value="DEND syndrome"/>
</dbReference>
<dbReference type="Orphanet" id="276598">
    <property type="disease" value="Diazoxide-resistant focal hyperinsulinism due to SUR1 deficiency"/>
</dbReference>
<dbReference type="Orphanet" id="99885">
    <property type="disease" value="Isolated permanent neonatal diabetes mellitus"/>
</dbReference>
<dbReference type="Orphanet" id="552">
    <property type="disease" value="MODY"/>
</dbReference>
<dbReference type="Orphanet" id="99886">
    <property type="disease" value="Transient neonatal diabetes mellitus"/>
</dbReference>
<dbReference type="PharmGKB" id="PA24395"/>
<dbReference type="VEuPathDB" id="HostDB:ENSG00000006071"/>
<dbReference type="eggNOG" id="KOG0054">
    <property type="taxonomic scope" value="Eukaryota"/>
</dbReference>
<dbReference type="GeneTree" id="ENSGT00940000156626"/>
<dbReference type="HOGENOM" id="CLU_000604_27_6_1"/>
<dbReference type="InParanoid" id="Q09428"/>
<dbReference type="OMA" id="ANTVVLW"/>
<dbReference type="OrthoDB" id="6500128at2759"/>
<dbReference type="PAN-GO" id="Q09428">
    <property type="GO annotations" value="3 GO annotations based on evolutionary models"/>
</dbReference>
<dbReference type="PhylomeDB" id="Q09428"/>
<dbReference type="TreeFam" id="TF105201"/>
<dbReference type="PathwayCommons" id="Q09428"/>
<dbReference type="Reactome" id="R-HSA-1296025">
    <property type="pathway name" value="ATP sensitive Potassium channels"/>
</dbReference>
<dbReference type="Reactome" id="R-HSA-422356">
    <property type="pathway name" value="Regulation of insulin secretion"/>
</dbReference>
<dbReference type="Reactome" id="R-HSA-5683177">
    <property type="pathway name" value="Defective ABCC8 can cause hypo- and hyper-glycemias"/>
</dbReference>
<dbReference type="SignaLink" id="Q09428"/>
<dbReference type="SIGNOR" id="Q09428"/>
<dbReference type="BioGRID-ORCS" id="6833">
    <property type="hits" value="10 hits in 1157 CRISPR screens"/>
</dbReference>
<dbReference type="ChiTaRS" id="ABCC8">
    <property type="organism name" value="human"/>
</dbReference>
<dbReference type="GeneWiki" id="ABCC8"/>
<dbReference type="GenomeRNAi" id="6833"/>
<dbReference type="Pharos" id="Q09428">
    <property type="development level" value="Tclin"/>
</dbReference>
<dbReference type="PRO" id="PR:Q09428"/>
<dbReference type="Proteomes" id="UP000005640">
    <property type="component" value="Chromosome 11"/>
</dbReference>
<dbReference type="RNAct" id="Q09428">
    <property type="molecule type" value="protein"/>
</dbReference>
<dbReference type="Bgee" id="ENSG00000006071">
    <property type="expression patterns" value="Expressed in islet of Langerhans and 126 other cell types or tissues"/>
</dbReference>
<dbReference type="ExpressionAtlas" id="Q09428">
    <property type="expression patterns" value="baseline and differential"/>
</dbReference>
<dbReference type="GO" id="GO:0008282">
    <property type="term" value="C:inward rectifying potassium channel"/>
    <property type="evidence" value="ECO:0000314"/>
    <property type="project" value="BHF-UCL"/>
</dbReference>
<dbReference type="GO" id="GO:0016020">
    <property type="term" value="C:membrane"/>
    <property type="evidence" value="ECO:0000318"/>
    <property type="project" value="GO_Central"/>
</dbReference>
<dbReference type="GO" id="GO:0005886">
    <property type="term" value="C:plasma membrane"/>
    <property type="evidence" value="ECO:0000304"/>
    <property type="project" value="Reactome"/>
</dbReference>
<dbReference type="GO" id="GO:0031004">
    <property type="term" value="C:potassium ion-transporting ATPase complex"/>
    <property type="evidence" value="ECO:0000250"/>
    <property type="project" value="ARUK-UCL"/>
</dbReference>
<dbReference type="GO" id="GO:0042734">
    <property type="term" value="C:presynaptic membrane"/>
    <property type="evidence" value="ECO:0007669"/>
    <property type="project" value="Ensembl"/>
</dbReference>
<dbReference type="GO" id="GO:0042383">
    <property type="term" value="C:sarcolemma"/>
    <property type="evidence" value="ECO:0007669"/>
    <property type="project" value="Ensembl"/>
</dbReference>
<dbReference type="GO" id="GO:0030672">
    <property type="term" value="C:synaptic vesicle membrane"/>
    <property type="evidence" value="ECO:0007669"/>
    <property type="project" value="Ensembl"/>
</dbReference>
<dbReference type="GO" id="GO:0140359">
    <property type="term" value="F:ABC-type transporter activity"/>
    <property type="evidence" value="ECO:0007669"/>
    <property type="project" value="InterPro"/>
</dbReference>
<dbReference type="GO" id="GO:0043531">
    <property type="term" value="F:ADP binding"/>
    <property type="evidence" value="ECO:0007669"/>
    <property type="project" value="Ensembl"/>
</dbReference>
<dbReference type="GO" id="GO:0005524">
    <property type="term" value="F:ATP binding"/>
    <property type="evidence" value="ECO:0007669"/>
    <property type="project" value="UniProtKB-KW"/>
</dbReference>
<dbReference type="GO" id="GO:0016887">
    <property type="term" value="F:ATP hydrolysis activity"/>
    <property type="evidence" value="ECO:0007669"/>
    <property type="project" value="InterPro"/>
</dbReference>
<dbReference type="GO" id="GO:0015272">
    <property type="term" value="F:ATP-activated inward rectifier potassium channel activity"/>
    <property type="evidence" value="ECO:0000304"/>
    <property type="project" value="Reactome"/>
</dbReference>
<dbReference type="GO" id="GO:0019829">
    <property type="term" value="F:ATPase-coupled monoatomic cation transmembrane transporter activity"/>
    <property type="evidence" value="ECO:0000314"/>
    <property type="project" value="ARUK-UCL"/>
</dbReference>
<dbReference type="GO" id="GO:0042626">
    <property type="term" value="F:ATPase-coupled transmembrane transporter activity"/>
    <property type="evidence" value="ECO:0000318"/>
    <property type="project" value="GO_Central"/>
</dbReference>
<dbReference type="GO" id="GO:0046872">
    <property type="term" value="F:metal ion binding"/>
    <property type="evidence" value="ECO:0007669"/>
    <property type="project" value="UniProtKB-KW"/>
</dbReference>
<dbReference type="GO" id="GO:0005267">
    <property type="term" value="F:potassium channel activity"/>
    <property type="evidence" value="ECO:0000315"/>
    <property type="project" value="UniProtKB"/>
</dbReference>
<dbReference type="GO" id="GO:0008281">
    <property type="term" value="F:sulfonylurea receptor activity"/>
    <property type="evidence" value="ECO:0007669"/>
    <property type="project" value="InterPro"/>
</dbReference>
<dbReference type="GO" id="GO:0044325">
    <property type="term" value="F:transmembrane transporter binding"/>
    <property type="evidence" value="ECO:0000353"/>
    <property type="project" value="BHF-UCL"/>
</dbReference>
<dbReference type="GO" id="GO:0001508">
    <property type="term" value="P:action potential"/>
    <property type="evidence" value="ECO:0007669"/>
    <property type="project" value="Ensembl"/>
</dbReference>
<dbReference type="GO" id="GO:0031669">
    <property type="term" value="P:cellular response to nutrient levels"/>
    <property type="evidence" value="ECO:0007669"/>
    <property type="project" value="Ensembl"/>
</dbReference>
<dbReference type="GO" id="GO:0007565">
    <property type="term" value="P:female pregnancy"/>
    <property type="evidence" value="ECO:0007669"/>
    <property type="project" value="Ensembl"/>
</dbReference>
<dbReference type="GO" id="GO:0061535">
    <property type="term" value="P:glutamate secretion, neurotransmission"/>
    <property type="evidence" value="ECO:0007669"/>
    <property type="project" value="Ensembl"/>
</dbReference>
<dbReference type="GO" id="GO:0098662">
    <property type="term" value="P:inorganic cation transmembrane transport"/>
    <property type="evidence" value="ECO:0000250"/>
    <property type="project" value="ARUK-UCL"/>
</dbReference>
<dbReference type="GO" id="GO:0001678">
    <property type="term" value="P:intracellular glucose homeostasis"/>
    <property type="evidence" value="ECO:0007669"/>
    <property type="project" value="Ensembl"/>
</dbReference>
<dbReference type="GO" id="GO:0007613">
    <property type="term" value="P:memory"/>
    <property type="evidence" value="ECO:0007669"/>
    <property type="project" value="Ensembl"/>
</dbReference>
<dbReference type="GO" id="GO:0016525">
    <property type="term" value="P:negative regulation of angiogenesis"/>
    <property type="evidence" value="ECO:0007669"/>
    <property type="project" value="Ensembl"/>
</dbReference>
<dbReference type="GO" id="GO:1905604">
    <property type="term" value="P:negative regulation of blood-brain barrier permeability"/>
    <property type="evidence" value="ECO:0007669"/>
    <property type="project" value="Ensembl"/>
</dbReference>
<dbReference type="GO" id="GO:0060253">
    <property type="term" value="P:negative regulation of glial cell proliferation"/>
    <property type="evidence" value="ECO:0007669"/>
    <property type="project" value="Ensembl"/>
</dbReference>
<dbReference type="GO" id="GO:0046676">
    <property type="term" value="P:negative regulation of insulin secretion"/>
    <property type="evidence" value="ECO:0007669"/>
    <property type="project" value="Ensembl"/>
</dbReference>
<dbReference type="GO" id="GO:0010989">
    <property type="term" value="P:negative regulation of low-density lipoprotein particle clearance"/>
    <property type="evidence" value="ECO:0007669"/>
    <property type="project" value="Ensembl"/>
</dbReference>
<dbReference type="GO" id="GO:0061855">
    <property type="term" value="P:negative regulation of neuroblast migration"/>
    <property type="evidence" value="ECO:0007669"/>
    <property type="project" value="Ensembl"/>
</dbReference>
<dbReference type="GO" id="GO:0050905">
    <property type="term" value="P:neuromuscular process"/>
    <property type="evidence" value="ECO:0007669"/>
    <property type="project" value="Ensembl"/>
</dbReference>
<dbReference type="GO" id="GO:0035774">
    <property type="term" value="P:positive regulation of insulin secretion involved in cellular response to glucose stimulus"/>
    <property type="evidence" value="ECO:0007669"/>
    <property type="project" value="Ensembl"/>
</dbReference>
<dbReference type="GO" id="GO:0043268">
    <property type="term" value="P:positive regulation of potassium ion transport"/>
    <property type="evidence" value="ECO:0007669"/>
    <property type="project" value="Ensembl"/>
</dbReference>
<dbReference type="GO" id="GO:1905075">
    <property type="term" value="P:positive regulation of tight junction disassembly"/>
    <property type="evidence" value="ECO:0007669"/>
    <property type="project" value="Ensembl"/>
</dbReference>
<dbReference type="GO" id="GO:0032760">
    <property type="term" value="P:positive regulation of tumor necrosis factor production"/>
    <property type="evidence" value="ECO:0007669"/>
    <property type="project" value="Ensembl"/>
</dbReference>
<dbReference type="GO" id="GO:1900721">
    <property type="term" value="P:positive regulation of uterine smooth muscle relaxation"/>
    <property type="evidence" value="ECO:0007669"/>
    <property type="project" value="Ensembl"/>
</dbReference>
<dbReference type="GO" id="GO:1990573">
    <property type="term" value="P:potassium ion import across plasma membrane"/>
    <property type="evidence" value="ECO:0000250"/>
    <property type="project" value="ComplexPortal"/>
</dbReference>
<dbReference type="GO" id="GO:0071805">
    <property type="term" value="P:potassium ion transmembrane transport"/>
    <property type="evidence" value="ECO:0000303"/>
    <property type="project" value="ARUK-UCL"/>
</dbReference>
<dbReference type="GO" id="GO:0006813">
    <property type="term" value="P:potassium ion transport"/>
    <property type="evidence" value="ECO:0000304"/>
    <property type="project" value="ProtInc"/>
</dbReference>
<dbReference type="GO" id="GO:0032868">
    <property type="term" value="P:response to insulin"/>
    <property type="evidence" value="ECO:0007669"/>
    <property type="project" value="Ensembl"/>
</dbReference>
<dbReference type="GO" id="GO:0032496">
    <property type="term" value="P:response to lipopolysaccharide"/>
    <property type="evidence" value="ECO:0007669"/>
    <property type="project" value="Ensembl"/>
</dbReference>
<dbReference type="GO" id="GO:0009268">
    <property type="term" value="P:response to pH"/>
    <property type="evidence" value="ECO:0007669"/>
    <property type="project" value="Ensembl"/>
</dbReference>
<dbReference type="GO" id="GO:0009410">
    <property type="term" value="P:response to xenobiotic stimulus"/>
    <property type="evidence" value="ECO:0007669"/>
    <property type="project" value="Ensembl"/>
</dbReference>
<dbReference type="GO" id="GO:0010043">
    <property type="term" value="P:response to zinc ion"/>
    <property type="evidence" value="ECO:0007669"/>
    <property type="project" value="Ensembl"/>
</dbReference>
<dbReference type="GO" id="GO:0055085">
    <property type="term" value="P:transmembrane transport"/>
    <property type="evidence" value="ECO:0000318"/>
    <property type="project" value="GO_Central"/>
</dbReference>
<dbReference type="GO" id="GO:0008542">
    <property type="term" value="P:visual learning"/>
    <property type="evidence" value="ECO:0007669"/>
    <property type="project" value="Ensembl"/>
</dbReference>
<dbReference type="CDD" id="cd18591">
    <property type="entry name" value="ABC_6TM_SUR1_D1_like"/>
    <property type="match status" value="1"/>
</dbReference>
<dbReference type="CDD" id="cd18602">
    <property type="entry name" value="ABC_6TM_SUR1_D2_like"/>
    <property type="match status" value="1"/>
</dbReference>
<dbReference type="DisProt" id="DP02881"/>
<dbReference type="FunFam" id="1.20.1560.10:FF:000416">
    <property type="entry name" value="ATP-binding cassette sub-family C member 8"/>
    <property type="match status" value="1"/>
</dbReference>
<dbReference type="FunFam" id="1.20.1560.10:FF:000369">
    <property type="entry name" value="ATP-binding cassette, sub-family C (CFTR/MRP), member 8"/>
    <property type="match status" value="1"/>
</dbReference>
<dbReference type="FunFam" id="1.20.1560.10:FF:000005">
    <property type="entry name" value="ATP-binding cassette, sub-family C (CFTR/MRP), member 9"/>
    <property type="match status" value="1"/>
</dbReference>
<dbReference type="FunFam" id="3.40.50.300:FF:000197">
    <property type="entry name" value="ATP-binding cassette, sub-family C (CFTR/MRP), member 9"/>
    <property type="match status" value="1"/>
</dbReference>
<dbReference type="FunFam" id="3.40.50.300:FF:000394">
    <property type="entry name" value="ATP-binding cassette, sub-family C (CFTR/MRP), member 9"/>
    <property type="match status" value="1"/>
</dbReference>
<dbReference type="Gene3D" id="1.20.1560.10">
    <property type="entry name" value="ABC transporter type 1, transmembrane domain"/>
    <property type="match status" value="2"/>
</dbReference>
<dbReference type="Gene3D" id="3.40.50.300">
    <property type="entry name" value="P-loop containing nucleotide triphosphate hydrolases"/>
    <property type="match status" value="2"/>
</dbReference>
<dbReference type="InterPro" id="IPR003593">
    <property type="entry name" value="AAA+_ATPase"/>
</dbReference>
<dbReference type="InterPro" id="IPR011527">
    <property type="entry name" value="ABC1_TM_dom"/>
</dbReference>
<dbReference type="InterPro" id="IPR036640">
    <property type="entry name" value="ABC1_TM_sf"/>
</dbReference>
<dbReference type="InterPro" id="IPR003439">
    <property type="entry name" value="ABC_transporter-like_ATP-bd"/>
</dbReference>
<dbReference type="InterPro" id="IPR017871">
    <property type="entry name" value="ABC_transporter-like_CS"/>
</dbReference>
<dbReference type="InterPro" id="IPR050173">
    <property type="entry name" value="ABC_transporter_C-like"/>
</dbReference>
<dbReference type="InterPro" id="IPR000844">
    <property type="entry name" value="ABCC8"/>
</dbReference>
<dbReference type="InterPro" id="IPR000388">
    <property type="entry name" value="ABCC8/9"/>
</dbReference>
<dbReference type="InterPro" id="IPR027417">
    <property type="entry name" value="P-loop_NTPase"/>
</dbReference>
<dbReference type="PANTHER" id="PTHR24223">
    <property type="entry name" value="ATP-BINDING CASSETTE SUB-FAMILY C"/>
    <property type="match status" value="1"/>
</dbReference>
<dbReference type="PANTHER" id="PTHR24223:SF187">
    <property type="entry name" value="ATP-BINDING CASSETTE SUB-FAMILY C MEMBER 8"/>
    <property type="match status" value="1"/>
</dbReference>
<dbReference type="Pfam" id="PF00664">
    <property type="entry name" value="ABC_membrane"/>
    <property type="match status" value="2"/>
</dbReference>
<dbReference type="Pfam" id="PF00005">
    <property type="entry name" value="ABC_tran"/>
    <property type="match status" value="2"/>
</dbReference>
<dbReference type="PRINTS" id="PR01093">
    <property type="entry name" value="SULFNYLUR1"/>
</dbReference>
<dbReference type="PRINTS" id="PR01092">
    <property type="entry name" value="SULFNYLUREAR"/>
</dbReference>
<dbReference type="SMART" id="SM00382">
    <property type="entry name" value="AAA"/>
    <property type="match status" value="2"/>
</dbReference>
<dbReference type="SUPFAM" id="SSF90123">
    <property type="entry name" value="ABC transporter transmembrane region"/>
    <property type="match status" value="2"/>
</dbReference>
<dbReference type="SUPFAM" id="SSF52540">
    <property type="entry name" value="P-loop containing nucleoside triphosphate hydrolases"/>
    <property type="match status" value="2"/>
</dbReference>
<dbReference type="PROSITE" id="PS50929">
    <property type="entry name" value="ABC_TM1F"/>
    <property type="match status" value="2"/>
</dbReference>
<dbReference type="PROSITE" id="PS00211">
    <property type="entry name" value="ABC_TRANSPORTER_1"/>
    <property type="match status" value="2"/>
</dbReference>
<dbReference type="PROSITE" id="PS50893">
    <property type="entry name" value="ABC_TRANSPORTER_2"/>
    <property type="match status" value="2"/>
</dbReference>
<evidence type="ECO:0000250" key="1">
    <source>
        <dbReference type="UniProtKB" id="Q09427"/>
    </source>
</evidence>
<evidence type="ECO:0000255" key="2">
    <source>
        <dbReference type="PROSITE-ProRule" id="PRU00434"/>
    </source>
</evidence>
<evidence type="ECO:0000255" key="3">
    <source>
        <dbReference type="PROSITE-ProRule" id="PRU00441"/>
    </source>
</evidence>
<evidence type="ECO:0000256" key="4">
    <source>
        <dbReference type="SAM" id="MobiDB-lite"/>
    </source>
</evidence>
<evidence type="ECO:0000269" key="5">
    <source>
    </source>
</evidence>
<evidence type="ECO:0000269" key="6">
    <source>
    </source>
</evidence>
<evidence type="ECO:0000269" key="7">
    <source>
    </source>
</evidence>
<evidence type="ECO:0000269" key="8">
    <source>
    </source>
</evidence>
<evidence type="ECO:0000269" key="9">
    <source>
    </source>
</evidence>
<evidence type="ECO:0000269" key="10">
    <source>
    </source>
</evidence>
<evidence type="ECO:0000269" key="11">
    <source>
    </source>
</evidence>
<evidence type="ECO:0000269" key="12">
    <source>
    </source>
</evidence>
<evidence type="ECO:0000269" key="13">
    <source>
    </source>
</evidence>
<evidence type="ECO:0000269" key="14">
    <source>
    </source>
</evidence>
<evidence type="ECO:0000269" key="15">
    <source>
    </source>
</evidence>
<evidence type="ECO:0000269" key="16">
    <source>
    </source>
</evidence>
<evidence type="ECO:0000269" key="17">
    <source>
    </source>
</evidence>
<evidence type="ECO:0000269" key="18">
    <source>
    </source>
</evidence>
<evidence type="ECO:0000269" key="19">
    <source>
    </source>
</evidence>
<evidence type="ECO:0000269" key="20">
    <source>
    </source>
</evidence>
<evidence type="ECO:0000269" key="21">
    <source>
    </source>
</evidence>
<evidence type="ECO:0000269" key="22">
    <source>
    </source>
</evidence>
<evidence type="ECO:0000269" key="23">
    <source>
    </source>
</evidence>
<evidence type="ECO:0000269" key="24">
    <source>
    </source>
</evidence>
<evidence type="ECO:0000269" key="25">
    <source>
    </source>
</evidence>
<evidence type="ECO:0000269" key="26">
    <source>
    </source>
</evidence>
<evidence type="ECO:0000269" key="27">
    <source>
    </source>
</evidence>
<evidence type="ECO:0000269" key="28">
    <source>
    </source>
</evidence>
<evidence type="ECO:0000269" key="29">
    <source>
    </source>
</evidence>
<evidence type="ECO:0000269" key="30">
    <source>
    </source>
</evidence>
<evidence type="ECO:0000269" key="31">
    <source>
    </source>
</evidence>
<evidence type="ECO:0000269" key="32">
    <source>
    </source>
</evidence>
<evidence type="ECO:0000269" key="33">
    <source>
    </source>
</evidence>
<evidence type="ECO:0000269" key="34">
    <source>
    </source>
</evidence>
<evidence type="ECO:0000269" key="35">
    <source>
    </source>
</evidence>
<evidence type="ECO:0000269" key="36">
    <source>
    </source>
</evidence>
<evidence type="ECO:0000269" key="37">
    <source>
    </source>
</evidence>
<evidence type="ECO:0000269" key="38">
    <source>
    </source>
</evidence>
<evidence type="ECO:0000269" key="39">
    <source ref="2"/>
</evidence>
<evidence type="ECO:0000269" key="40">
    <source ref="3"/>
</evidence>
<evidence type="ECO:0000269" key="41">
    <source ref="4"/>
</evidence>
<evidence type="ECO:0000303" key="42">
    <source>
    </source>
</evidence>
<evidence type="ECO:0000305" key="43"/>
<evidence type="ECO:0000305" key="44">
    <source>
    </source>
</evidence>
<evidence type="ECO:0007744" key="45">
    <source>
        <dbReference type="PDB" id="6C3O"/>
    </source>
</evidence>
<evidence type="ECO:0007744" key="46">
    <source>
        <dbReference type="PDB" id="6C3P"/>
    </source>
</evidence>
<evidence type="ECO:0007744" key="47">
    <source>
        <dbReference type="PDB" id="7S5V"/>
    </source>
</evidence>
<evidence type="ECO:0007744" key="48">
    <source>
        <dbReference type="PDB" id="7S5X"/>
    </source>
</evidence>
<evidence type="ECO:0007744" key="49">
    <source>
        <dbReference type="PDB" id="7S5Y"/>
    </source>
</evidence>
<evidence type="ECO:0007744" key="50">
    <source>
        <dbReference type="PDB" id="7S5Z"/>
    </source>
</evidence>
<evidence type="ECO:0007744" key="51">
    <source>
        <dbReference type="PDB" id="7S60"/>
    </source>
</evidence>
<evidence type="ECO:0007744" key="52">
    <source>
        <dbReference type="PDB" id="7S61"/>
    </source>
</evidence>
<evidence type="ECO:0007829" key="53">
    <source>
        <dbReference type="PDB" id="7S5V"/>
    </source>
</evidence>
<comment type="function">
    <text evidence="25 26 27 28">Regulator subunit of pancreatic ATP-sensitive potassium channel (KATP), playing a major role in the regulation of insulin release. In pancreatic cells, it forms KATP channels with KCNJ11; KCNJ11 forms the channel pore while ABCC8 is required for activation and regulation.</text>
</comment>
<comment type="activity regulation">
    <text evidence="27 28">KATP channels are regulated by cytoplasmic ATP/ADP ratios; ATP inhibits the channel by closing the pore, while ADP activates the channel (PubMed:29286281, PubMed:34815345). Activated by phosphatidylinositol 4,5-biphosphate (PtdIns(4,5)P2) (PubMed:34815345).</text>
</comment>
<comment type="subunit">
    <text evidence="27 28">Forms an heterooctamer with KCNJ11; four ABCC8/SUR1 molecules interact with one KCNJ11 homotetramer.</text>
</comment>
<comment type="interaction">
    <interactant intactId="EBI-15807650">
        <id>Q09428-1</id>
    </interactant>
    <interactant intactId="EBI-2866553">
        <id>Q14654</id>
        <label>KCNJ11</label>
    </interactant>
    <organismsDiffer>false</organismsDiffer>
    <experiments>2</experiments>
</comment>
<comment type="subcellular location">
    <subcellularLocation>
        <location evidence="25">Cell membrane</location>
        <topology evidence="27 28">Multi-pass membrane protein</topology>
    </subcellularLocation>
</comment>
<comment type="alternative products">
    <event type="alternative splicing"/>
    <isoform>
        <id>Q09428-1</id>
        <name>1</name>
        <sequence type="displayed"/>
    </isoform>
    <isoform>
        <id>Q09428-2</id>
        <name>2</name>
        <sequence type="described" ref="VSP_000055"/>
    </isoform>
    <isoform>
        <id>Q09428-3</id>
        <name>3</name>
        <name>SUR1Delta2</name>
        <sequence type="described" ref="VSP_044090"/>
    </isoform>
</comment>
<comment type="disease" evidence="15">
    <disease id="DI-01896">
        <name>Leucine-induced hypoglycemia</name>
        <acronym>LIH</acronym>
        <description>Rare cause of hypoglycemia and is described as a condition in which symptomatic hypoglycemia is provoked by high protein feedings. Hypoglycemia is also elicited by administration of oral or intravenous infusions of a single amino acid, leucine.</description>
        <dbReference type="MIM" id="240800"/>
    </disease>
    <text>The disease is caused by variants affecting the gene represented in this entry.</text>
</comment>
<comment type="disease" evidence="5 6 7 9 10 11 12 13 14 16 17 18 19 20 25 26 31 32 33 36 37 38">
    <disease id="DI-01579">
        <name>Hyperinsulinemic hypoglycemia, familial, 1</name>
        <acronym>HHF1</acronym>
        <description>A form of hyperinsulinemic hypoglycemia, a clinically and genetically heterogeneous disorder characterized by inappropriate insulin secretion from the pancreatic beta-cells in the presence of low blood glucose levels. HHF1 is the most common cause of persistent hypoglycemia in infancy. Unless early and aggressive intervention is undertaken, brain damage from recurrent episodes of hypoglycemia may occur. HHF1 inheritance can be autosomal dominant or autosomal recessive.</description>
        <dbReference type="MIM" id="256450"/>
    </disease>
    <text>The disease is caused by variants affecting the gene represented in this entry.</text>
</comment>
<comment type="disease" evidence="21 22 23 24">
    <disease id="DI-05824">
        <name>Diabetes mellitus, permanent neonatal, 3</name>
        <acronym>PNDM3</acronym>
        <description>A form of permanent neonatal diabetes mellitus, a type of diabetes characterized by onset of persistent hyperglycemia within the first six months of life. Initial clinical manifestations include intrauterine growth retardation, hyperglycemia, glycosuria, osmotic polyuria, severe dehydration, and failure to thrive. Some PNDM3 patients may also have developmental delay, muscle weakness, and epilepsy. PNDM3 transmission pattern is consistent with autosomal dominant or autosomal recessive inheritance.</description>
        <dbReference type="MIM" id="618857"/>
    </disease>
    <text>The disease is caused by variants affecting the gene represented in this entry.</text>
</comment>
<comment type="disease" evidence="22">
    <disease id="DI-02381">
        <name>Transient neonatal diabetes mellitus 2</name>
        <acronym>TNDM2</acronym>
        <description>Neonatal diabetes is a form of diabetes mellitus defined by the onset of mild-to-severe hyperglycemia within the first months of life. Transient neonatal diabetes remits early, with a possible relapse during adolescence.</description>
        <dbReference type="MIM" id="610374"/>
    </disease>
    <text>The disease is caused by variants affecting the gene represented in this entry.</text>
</comment>
<comment type="miscellaneous">
    <molecule>Isoform 3</molecule>
    <text evidence="43">Abundant isoform with prodiabetic properties, predominant in heart.</text>
</comment>
<comment type="similarity">
    <text evidence="43">Belongs to the ABC transporter superfamily. ABCC family. Conjugate transporter (TC 3.A.1.208) subfamily.</text>
</comment>
<comment type="online information" name="ABCMdb">
    <link uri="http://abcm2.hegelab.org/search"/>
    <text>Database for mutations in ABC proteins</text>
</comment>
<sequence>MPLAFCGSENHSAAYRVDQGVLNNGCFVDALNVVPHVFLLFITFPILFIGWGSQSSKVHIHHSTWLHFPGHNLRWILTFMLLFVLVCEIAEGILSDGVTESHHLHLYMPAGMAFMAAVTSVVYYHNIETSNFPKLLIALLVYWTLAFITKTIKFVKFLDHAIGFSQLRFCLTGLLVILYGMLLLVEVNVIRVRRYIFFKTPREVKPPEDLQDLGVRFLQPFVNLLSKGTYWWMNAFIKTAHKKPIDLRAIGKLPIAMRALTNYQRLCEAFDAQVRKDIQGTQGARAIWQALSHAFGRRLVLSSTFRILADLLGFAGPLCIFGIVDHLGKENDVFQPKTQFLGVYFVSSQEFLANAYVLAVLLFLALLLQRTFLQASYYVAIETGINLRGAIQTKIYNKIMHLSTSNLSMGEMTAGQICNLVAIDTNQLMWFFFLCPNLWAMPVQIIVGVILLYYILGVSALIGAAVIILLAPVQYFVATKLSQAQRSTLEYSNERLKQTNEMLRGIKLLKLYAWENIFRTRVETTRRKEMTSLRAFAIYTSISIFMNTAIPIAAVLITFVGHVSFFKEADFSPSVAFASLSLFHILVTPLFLLSSVVRSTVKALVSVQKLSEFLSSAEIREEQCAPHEPTPQGPASKYQAVPLRVVNRKRPAREDCRGLTGPLQSLVPSADGDADNCCVQIMGGYFTWTPDGIPTLSNITIRIPRGQLTMIVGQVGCGKSSLLLAALGEMQKVSGAVFWSSLPDSEIGEDPSPERETATDLDIRKRGPVAYASQKPWLLNATVEENIIFESPFNKQRYKMVIEACSLQPDIDILPHGDQTQIGERGINLSGGQRQRISVARALYQHANVVFLDDPFSALDIHLSDHLMQAGILELLRDDKRTVVLVTHKLQYLPHADWIIAMKDGTIQREGTLKDFQRSECQLFEHWKTLMNRQDQELEKETVTERKATEPPQGLSRAMSSRDGLLQDEEEEEEEAAESEEDDNLSSMLHQRAEIPWRACAKYLSSAGILLLSLLVFSQLLKHMVLVAIDYWLAKWTDSALTLTPAARNCSLSQECTLDQTVYAMVFTVLCSLGIVLCLVTSVTVEWTGLKVAKRLHRSLLNRIILAPMRFFETTPLGSILNRFSSDCNTIDQHIPSTLECLSRSTLLCVSALAVISYVTPVFLVALLPLAIVCYFIQKYFRVASRDLQQLDDTTQLPLLSHFAETVEGLTTIRAFRYEARFQQKLLEYTDSNNIASLFLTAANRWLEVRMEYIGACVVLIAAVTSISNSLHRELSAGLVGLGLTYALMVSNYLNWMVRNLADMELQLGAVKRIHGLLKTEAESYEGLLAPSLIPKNWPDQGKIQIQNLSVRYDSSLKPVLKHVNALIAPGQKIGICGRTGSGKSSFSLAFFRMVDTFEGHIIIDGIDIAKLPLHTLRSRLSIILQDPVLFSGTIRFNLDPERKCSDSTLWEALEIAQLKLVVKALPGGLDAIITEGGENFSQGQRQLFCLARAFVRKTSIFIMDEATASIDMATENILQKVVMTAFADRTVVTIAHRVHTILSADLVIVLKRGAILEFDKPEKLLSRKDSVFASFVRADK</sequence>
<proteinExistence type="evidence at protein level"/>
<name>ABCC8_HUMAN</name>
<reference key="1">
    <citation type="journal article" date="2012" name="Cell. Mol. Life Sci.">
        <title>An abundant, truncated human sulfonylurea receptor 1 splice variant has prodiabetic properties and impairs sulfonylurea action.</title>
        <authorList>
            <person name="Schmid D."/>
            <person name="Stolzlechner M."/>
            <person name="Sorgner A."/>
            <person name="Bentele C."/>
            <person name="Assinger A."/>
            <person name="Chiba P."/>
            <person name="Moeslinger T."/>
        </authorList>
    </citation>
    <scope>NUCLEOTIDE SEQUENCE [MRNA] (ISOFORM 3)</scope>
    <source>
        <tissue>Heart</tissue>
    </source>
</reference>
<reference key="2">
    <citation type="submission" date="1996-06" db="EMBL/GenBank/DDBJ databases">
        <title>Human beta cell sulfonylurea receptor, SUR1, expression.</title>
        <authorList>
            <person name="Gonzalez G."/>
            <person name="Aguilar-Bryan L."/>
            <person name="Bryan J."/>
        </authorList>
    </citation>
    <scope>NUCLEOTIDE SEQUENCE [GENOMIC DNA / MRNA]</scope>
    <scope>ALTERNATIVE SPLICING</scope>
    <scope>VARIANT SER-1369</scope>
    <source>
        <tissue>Pancreatic islet</tissue>
    </source>
</reference>
<reference key="3">
    <citation type="submission" date="1996-07" db="EMBL/GenBank/DDBJ databases">
        <authorList>
            <person name="Thomas P.T."/>
            <person name="Wohllk N."/>
            <person name="Huang E."/>
            <person name="Gagel R.F."/>
            <person name="Cote G.J."/>
        </authorList>
    </citation>
    <scope>NUCLEOTIDE SEQUENCE [GENOMIC DNA / MRNA] (ISOFORM 1)</scope>
    <scope>VARIANT SER-1369</scope>
    <scope>VARIANT PNDM3 PRO-225</scope>
    <source>
        <tissue>Brain</tissue>
        <tissue>Foreskin</tissue>
    </source>
</reference>
<reference key="4">
    <citation type="submission" date="1998-08" db="EMBL/GenBank/DDBJ databases">
        <authorList>
            <person name="Nishimura M."/>
            <person name="Miki T."/>
            <person name="Aizawa T."/>
            <person name="Seino S."/>
        </authorList>
    </citation>
    <scope>NUCLEOTIDE SEQUENCE [MRNA] (ISOFORM 1)</scope>
    <scope>VARIANT SER-1369</scope>
    <source>
        <tissue>Pancreas</tissue>
    </source>
</reference>
<reference key="5">
    <citation type="journal article" date="2006" name="Nature">
        <title>Human chromosome 11 DNA sequence and analysis including novel gene identification.</title>
        <authorList>
            <person name="Taylor T.D."/>
            <person name="Noguchi H."/>
            <person name="Totoki Y."/>
            <person name="Toyoda A."/>
            <person name="Kuroki Y."/>
            <person name="Dewar K."/>
            <person name="Lloyd C."/>
            <person name="Itoh T."/>
            <person name="Takeda T."/>
            <person name="Kim D.-W."/>
            <person name="She X."/>
            <person name="Barlow K.F."/>
            <person name="Bloom T."/>
            <person name="Bruford E."/>
            <person name="Chang J.L."/>
            <person name="Cuomo C.A."/>
            <person name="Eichler E."/>
            <person name="FitzGerald M.G."/>
            <person name="Jaffe D.B."/>
            <person name="LaButti K."/>
            <person name="Nicol R."/>
            <person name="Park H.-S."/>
            <person name="Seaman C."/>
            <person name="Sougnez C."/>
            <person name="Yang X."/>
            <person name="Zimmer A.R."/>
            <person name="Zody M.C."/>
            <person name="Birren B.W."/>
            <person name="Nusbaum C."/>
            <person name="Fujiyama A."/>
            <person name="Hattori M."/>
            <person name="Rogers J."/>
            <person name="Lander E.S."/>
            <person name="Sakaki Y."/>
        </authorList>
    </citation>
    <scope>NUCLEOTIDE SEQUENCE [LARGE SCALE GENOMIC DNA]</scope>
</reference>
<reference key="6">
    <citation type="journal article" date="1995" name="Science">
        <title>Mutations in the sulfonylurea receptor gene in familial persistent hyperinsulinemic hypoglycemia of infancy.</title>
        <authorList>
            <person name="Thomas P.M."/>
            <person name="Cote G.J."/>
            <person name="Wohllk N."/>
            <person name="Haddad B."/>
            <person name="Mathew P.M."/>
            <person name="Rabl W."/>
            <person name="Aguilar-Bryan L."/>
            <person name="Gagel R.F."/>
            <person name="Bryan J."/>
        </authorList>
    </citation>
    <scope>NUCLEOTIDE SEQUENCE [MRNA] OF 1187-1581</scope>
    <scope>VARIANT SER-1369</scope>
    <source>
        <tissue>Pancreatic islet</tissue>
    </source>
</reference>
<reference key="7">
    <citation type="journal article" date="1999" name="J. Biol. Chem.">
        <title>Membrane topology of the amino-terminal region of the sulfonylurea receptor.</title>
        <authorList>
            <person name="Raab-Graham K.F."/>
            <person name="Cirilo L.J."/>
            <person name="Boettcher A.A."/>
            <person name="Radeke C.M."/>
            <person name="Vandenberg C.A."/>
        </authorList>
    </citation>
    <scope>TOPOLOGY</scope>
</reference>
<reference evidence="45 46" key="8">
    <citation type="journal article" date="2017" name="Elife">
        <title>Molecular structure of human KATP in complex with ATP and ADP.</title>
        <authorList>
            <person name="Lee K.P.K."/>
            <person name="Chen J."/>
            <person name="MacKinnon R."/>
        </authorList>
    </citation>
    <scope>STRUCTURE BY ELECTRON MICROSCOPY (3.90 ANGSTROMS) IN COMPLEX WITH ATP; ADP AND MG(2+)</scope>
    <scope>FUNCTION</scope>
    <scope>ACTIVITY REGULATION</scope>
    <scope>TOPOLOGY</scope>
</reference>
<reference evidence="47 48 49 50 51 52" key="9">
    <citation type="journal article" date="2021" name="Proc. Natl. Acad. Sci. U.S.A.">
        <title>Molecular structure of an open human KATP channel.</title>
        <authorList>
            <person name="Zhao C."/>
            <person name="MacKinnon R."/>
        </authorList>
    </citation>
    <scope>STRUCTURE BY ELECTRON MICROSCOPY (3.30 ANGSTROMS) OF 2-1581</scope>
    <scope>FUNCTION</scope>
    <scope>ACTIVITY REGULATION</scope>
</reference>
<reference key="10">
    <citation type="journal article" date="1999" name="Hum. Mutat.">
        <title>Congenital hyperinsulinism: molecular basis of a heterogeneous disease.</title>
        <authorList>
            <person name="Meissner T."/>
            <person name="Beinbrech B."/>
            <person name="Mayatepek E."/>
        </authorList>
    </citation>
    <scope>REVIEW ON VARIANTS</scope>
</reference>
<reference key="11">
    <citation type="journal article" date="1996" name="Am. J. Hum. Genet.">
        <title>Inactivation of the first nucleotide-binding fold of the sulfonylurea receptor, and familial persistent hyperinsulinemic hypoglycemia of infancy.</title>
        <authorList>
            <person name="Thomas P.M."/>
            <person name="Wohllk N."/>
            <person name="Huang E."/>
            <person name="Kuhnle U."/>
            <person name="Rabl W."/>
            <person name="Gagel R.F."/>
            <person name="Cote G.J."/>
        </authorList>
    </citation>
    <scope>VARIANT HHF1 VAL-716</scope>
</reference>
<reference key="12">
    <citation type="journal article" date="1996" name="Diabetes">
        <title>Sequence variants in the sulfonylurea receptor (SUR) gene are associated with NIDDM in Caucasians.</title>
        <authorList>
            <person name="Inoue H."/>
            <person name="Ferrer J."/>
            <person name="Welling C.M."/>
            <person name="Elbein S.C."/>
            <person name="Hoffman M."/>
            <person name="Mayorga R."/>
            <person name="Warren-Perry M."/>
            <person name="Zhang Y."/>
            <person name="Millns H."/>
            <person name="Turner R."/>
            <person name="Province M."/>
            <person name="Bryan J."/>
            <person name="Permutt M.A."/>
            <person name="Aguilar-Bryan L."/>
        </authorList>
    </citation>
    <scope>VARIANT SER-1369</scope>
</reference>
<reference key="13">
    <citation type="journal article" date="1996" name="Hum. Mol. Genet.">
        <title>Mutations in the sulfonylurea receptor gene are associated with familial hyperinsulinism in Ashkenazi Jews.</title>
        <authorList>
            <person name="Nestorowicz A."/>
            <person name="Wilson B.A."/>
            <person name="Schoor K.P."/>
            <person name="Inoue H."/>
            <person name="Glaser B."/>
            <person name="Landau H."/>
            <person name="Stanley C.A."/>
            <person name="Thornton P.S."/>
            <person name="Clement J.P. IV"/>
            <person name="Bryan J."/>
            <person name="Aguilar-Bryan L."/>
            <person name="Permutt M.A."/>
        </authorList>
    </citation>
    <scope>VARIANT HHF1 PHE-1387 DEL</scope>
    <scope>VARIANTS GLY-1360; SER-1369 AND ILE-1572</scope>
</reference>
<reference key="14">
    <citation type="journal article" date="1996" name="Science">
        <title>Adenosine diphosphate as an intracellular regulator of insulin secretion.</title>
        <authorList>
            <person name="Nichols C.G."/>
            <person name="Shyng S.-L."/>
            <person name="Nestorowicz A."/>
            <person name="Glaser B."/>
            <person name="Clement J.P. IV"/>
            <person name="Gonzalez G."/>
            <person name="Aguilar-Bryan L."/>
            <person name="Permutt M.A."/>
            <person name="Bryan J."/>
        </authorList>
    </citation>
    <scope>CHARACTERIZATION OF VARIANT HHF1 ARG-1478</scope>
</reference>
<reference key="15">
    <citation type="journal article" date="1998" name="Diabetes">
        <title>Identification and functional analysis of sulfonylurea receptor 1 variants in Japanese patients with NIDDM.</title>
        <authorList>
            <person name="Ohta Y."/>
            <person name="Tanizawa Y."/>
            <person name="Inoue H."/>
            <person name="Hosaka T."/>
            <person name="Ueda K."/>
            <person name="Matsutani A."/>
            <person name="Repunte V.P."/>
            <person name="Yamada M."/>
            <person name="Kurachi Y."/>
            <person name="Bryan J."/>
            <person name="Aguilar-Bryan L."/>
            <person name="Permutt M.A."/>
            <person name="Oka Y."/>
        </authorList>
    </citation>
    <scope>VARIANTS GLN-275; MET-560; ASN-810; CYS-834 AND SER-1369</scope>
</reference>
<reference key="16">
    <citation type="journal article" date="1998" name="Diabetes">
        <title>Decreased tolbutamide-stimulated insulin secretion in healthy subjects with sequence variants in the high-affinity sulfonylurea receptor gene.</title>
        <authorList>
            <person name="Hansen T."/>
            <person name="Echwald S.M."/>
            <person name="Hansen L."/>
            <person name="Moeller A.M."/>
            <person name="Almind K."/>
            <person name="Clausen J.O."/>
            <person name="Urhammer S.A."/>
            <person name="Inoue H."/>
            <person name="Ferrer J."/>
            <person name="Bryan J."/>
            <person name="Aguilar-Bryan L."/>
            <person name="Permutt M.A."/>
            <person name="Pedersen O."/>
        </authorList>
    </citation>
    <scope>VARIANTS ASN-673 AND SER-1369</scope>
</reference>
<reference key="17">
    <citation type="journal article" date="1998" name="Diabetes">
        <title>Functional analyses of novel mutations in the sulfonylurea receptor 1 associated with persistent hyperinsulinemic hypoglycemia of infancy.</title>
        <authorList>
            <person name="Shyng S.-L."/>
            <person name="Ferrigni T."/>
            <person name="Shepard J.B."/>
            <person name="Nestorowicz A."/>
            <person name="Glaser B."/>
            <person name="Permutt M.A."/>
            <person name="Nichols C.G."/>
        </authorList>
    </citation>
    <scope>CHARACTERIZATION OF VARIANTS HHF1 GLN-125; SER-188; LEU-591; MET-1138; GLN-1214; SER-1381; PHE-1387 DEL AND HIS-1393</scope>
</reference>
<reference key="18">
    <citation type="journal article" date="1998" name="Hum. Mol. Genet.">
        <title>Genetic heterogeneity in familial hyperinsulinism.</title>
        <authorList>
            <person name="Nestorowicz A."/>
            <person name="Glaser B."/>
            <person name="Wilson B.A."/>
            <person name="Shyng S.-L."/>
            <person name="Nichols C.G."/>
            <person name="Stanley C.A."/>
            <person name="Thornton P.S."/>
            <person name="Permutt M.A."/>
        </authorList>
    </citation>
    <scope>VARIANTS HHF1 GLN-74; GLN-125; SER-188; ASP-406; LEU-591; MET-1138; GLN-1214; ARG-1378; SER-1381; PHE-1387 DEL AND HIS-1393</scope>
</reference>
<reference key="19">
    <citation type="journal article" date="1998" name="J. Clin. Invest.">
        <title>Paternal mutation of the sulfonylurea receptor (SUR1) gene and maternal loss of 11p15 imprinted genes lead to persistent hyperinsulinism in focal adenomatous hyperplasia.</title>
        <authorList>
            <person name="Verkarre V."/>
            <person name="Fournet J.-C."/>
            <person name="de Lonlay P."/>
            <person name="Gross-Morand M.-S."/>
            <person name="Devillers M."/>
            <person name="Rahier J."/>
            <person name="Brunelle F."/>
            <person name="Robert J.-J."/>
            <person name="Nihoul-Fekete C."/>
            <person name="Saudubray J.-M."/>
            <person name="Junien C."/>
        </authorList>
    </citation>
    <scope>VARIANTS HHF1 PRO-1352; CYS-1420 AND TRP-1493</scope>
</reference>
<reference key="20">
    <citation type="journal article" date="1999" name="Diabetes">
        <title>A point mutation inactivating the sulfonylurea receptor causes the severe form of persistent hyperinsulinemic hypoglycemia of infancy in Finland.</title>
        <authorList>
            <person name="Otonkoski T."/>
            <person name="Aemmaelae C."/>
            <person name="Huopio H."/>
            <person name="Cote G.J."/>
            <person name="Chapman J."/>
            <person name="Cosgrove K."/>
            <person name="Ashfield R."/>
            <person name="Huang E."/>
            <person name="Komulainen J."/>
            <person name="Ashcroft F.M."/>
            <person name="Dunne M.J."/>
            <person name="Kere J."/>
            <person name="Thomas P.M."/>
        </authorList>
    </citation>
    <scope>VARIANT HHF1 ASP-187</scope>
</reference>
<reference key="21">
    <citation type="journal article" date="1999" name="Endocr. Rev.">
        <title>Molecular biology of adenosine triphosphate-sensitive potassium channels.</title>
        <authorList>
            <person name="Aguilar-Bryan L."/>
            <person name="Bryan J."/>
        </authorList>
    </citation>
    <scope>VARIANTS HHF1 PRO-116; ARG-418; PRO-508; CYS-620; PHE-956 AND MET-1360</scope>
</reference>
<reference key="22">
    <citation type="journal article" date="1999" name="Hum. Mutat.">
        <title>Intragenic single nucleotide polymorphism haplotype analysis of SUR1 mutations in familial hyperinsulinism.</title>
        <authorList>
            <person name="Glaser B."/>
            <person name="Furth J."/>
            <person name="Stanley C.A."/>
            <person name="Baker L."/>
            <person name="Thornton P.S."/>
            <person name="Landau H."/>
            <person name="Permutt M.A."/>
        </authorList>
    </citation>
    <scope>VARIANTS SER-1369 AND ILE-1572</scope>
</reference>
<reference key="23">
    <citation type="journal article" date="1999" name="N. Engl. J. Med.">
        <title>Clinical features of 52 neonates with hyperinsulinism.</title>
        <authorList>
            <person name="de Lonlay-Debeney P."/>
            <person name="Poggi-Travert F."/>
            <person name="Fournet J.-C."/>
            <person name="Sempoux C."/>
            <person name="Vici C.D."/>
            <person name="Brunelle F."/>
            <person name="Touati G."/>
            <person name="Rahier J."/>
            <person name="Junien C."/>
            <person name="Nihoul-Fekete C."/>
            <person name="Robert J.-J."/>
            <person name="Saudubray J.-M."/>
        </authorList>
    </citation>
    <scope>VARIANTS HHF1 GLY-841; CYS-1420 AND TRP-1493</scope>
</reference>
<reference key="24">
    <citation type="journal article" date="2000" name="Diabetes">
        <title>Genetic analysis of Japanese patients with persistent hyperinsulinemic hypoglycemia of infancy: nucleotide-binding fold-2 mutation impairs cooperative binding of adenine nucleotides to sulfonylurea receptor 1.</title>
        <authorList>
            <person name="Tanizawa Y."/>
            <person name="Matsuda K."/>
            <person name="Matsuo M."/>
            <person name="Ohta Y."/>
            <person name="Ochi N."/>
            <person name="Adachi M."/>
            <person name="Koga M."/>
            <person name="Mizuno S."/>
            <person name="Kajita M."/>
            <person name="Tanaka Y."/>
            <person name="Tachibana K."/>
            <person name="Inoue H."/>
            <person name="Furukawa S."/>
            <person name="Amachi T."/>
            <person name="Ueda K."/>
            <person name="Oka Y."/>
        </authorList>
    </citation>
    <scope>CHARACTERIZATION OF VARIANTS HHF1 CYS-1420 AND GLN-1436</scope>
    <scope>VARIANT SER-1369</scope>
</reference>
<reference key="25">
    <citation type="journal article" date="2000" name="J. Clin. Invest.">
        <title>Dominantly inherited hyperinsulinism caused by a mutation in the sulfonylurea receptor type 1.</title>
        <authorList>
            <person name="Huopio H."/>
            <person name="Reimann F."/>
            <person name="Ashfield R."/>
            <person name="Komulainen J."/>
            <person name="Lenko H.-L."/>
            <person name="Rahier J."/>
            <person name="Vauhkonen I."/>
            <person name="Kere J."/>
            <person name="Laakso M."/>
            <person name="Ashcroft F."/>
            <person name="Otonkoski T."/>
        </authorList>
    </citation>
    <scope>CHARACTERIZATION OF VARIANT HHF1 LYS-1506</scope>
</reference>
<reference key="26">
    <citation type="journal article" date="2001" name="Proc. Natl. Acad. Sci. U.S.A.">
        <title>Defective trafficking and function of KATP channels caused by a sulfonylurea receptor 1 mutation associated with persistent hyperinsulinemic hypoglycemia of infancy.</title>
        <authorList>
            <person name="Cartier E.A."/>
            <person name="Conti L.R."/>
            <person name="Vandenberg C.A."/>
            <person name="Shyng S.-L."/>
        </authorList>
    </citation>
    <scope>CHARACTERIZATION OF VARIANT HHF1 PHE-1387 DEL</scope>
</reference>
<reference key="27">
    <citation type="journal article" date="2002" name="J. Biol. Chem.">
        <title>Identification of a familial hyperinsulinism-causing mutation in the sulfonylurea receptor 1 that prevents normal trafficking and function of KATP channels.</title>
        <authorList>
            <person name="Taschenberger G."/>
            <person name="Mougey A."/>
            <person name="Shen S."/>
            <person name="Lester L.B."/>
            <person name="LaFranchi S."/>
            <person name="Shyng S.-L."/>
        </authorList>
    </citation>
    <scope>CHARACTERIZATION OF VARIANT HHF1 PRO-1543</scope>
</reference>
<reference key="28">
    <citation type="journal article" date="2002" name="J. Clin. Endocrinol. Metab.">
        <title>Acute insulin response tests for the differential diagnosis of congenital hyperinsulinism.</title>
        <authorList>
            <person name="Huopio H."/>
            <person name="Jaeaeskelaeinen J."/>
            <person name="Komulainen J."/>
            <person name="Miettinen R."/>
            <person name="Kaerkkaeinen P."/>
            <person name="Laakso M."/>
            <person name="Tapanainen P."/>
            <person name="Voutilainen R."/>
            <person name="Otonkoski T."/>
        </authorList>
    </citation>
    <scope>VARIANTS HHF1 ASP-187; THR-1457; LYS-1506; ASP-1550 AND VAL-1551</scope>
</reference>
<reference key="29">
    <citation type="journal article" date="2003" name="Diabetes">
        <title>Clinical and molecular characterization of a dominant form of congenital hyperinsulinism caused by a mutation in the high-affinity sulfonylurea receptor.</title>
        <authorList>
            <person name="Thornton P.S."/>
            <person name="MacMullen C."/>
            <person name="Ganguly A."/>
            <person name="Ruchelli E."/>
            <person name="Steinkrauss L."/>
            <person name="Crane A."/>
            <person name="Aguilar-Bryan L."/>
            <person name="Stanley C.A."/>
        </authorList>
    </citation>
    <scope>VARIANT HHF1 SER-1385 DEL</scope>
    <scope>CHARACTERIZATION OF VARIANT HHF1 SER-1385 DEL</scope>
</reference>
<reference key="30">
    <citation type="journal article" date="2004" name="J. Clin. Endocrinol. Metab.">
        <title>Familial leucine-sensitive hypoglycemia of infancy due to a dominant mutation of the beta-cell sulfonylurea receptor.</title>
        <authorList>
            <person name="Magge S.N."/>
            <person name="Shyng S.-L."/>
            <person name="MacMullen C."/>
            <person name="Steinkrauss L."/>
            <person name="Ganguly A."/>
            <person name="Katz L.E.L."/>
            <person name="Stanley C.A."/>
        </authorList>
    </citation>
    <scope>VARIANT LIH HIS-1352</scope>
    <scope>CHARACTERIZATION OF VARIANT LIH HIS-1352</scope>
</reference>
<reference key="31">
    <citation type="journal article" date="2004" name="J. Clin. Endocrinol. Metab.">
        <title>Hyperinsulinism of infancy: novel ABCC8 and KCNJ11 mutations and evidence for additional locus heterogeneity.</title>
        <authorList>
            <person name="Tornovsky S."/>
            <person name="Crane A."/>
            <person name="Cosgrove K.E."/>
            <person name="Hussain K."/>
            <person name="Lavie J."/>
            <person name="Heyman M."/>
            <person name="Nesher Y."/>
            <person name="Kuchinski N."/>
            <person name="Ben-Shushan E."/>
            <person name="Shatz O."/>
            <person name="Nahari E."/>
            <person name="Potikha T."/>
            <person name="Zangen D."/>
            <person name="Tenenbaum-Rakover Y."/>
            <person name="de Vries L."/>
            <person name="Argente J."/>
            <person name="Gracia R."/>
            <person name="Landau H."/>
            <person name="Eliakim A."/>
            <person name="Lindley K."/>
            <person name="Dunne M.J."/>
            <person name="Aguilar-Bryan L."/>
            <person name="Glaser B."/>
        </authorList>
    </citation>
    <scope>VARIANTS HHF1 GLU-70; ARG-111; GLU-1342; HIS-1418 AND TRP-1493</scope>
    <scope>CHARACTERIZATION OF VARIANTS HHF1 GLU-70; ARG-111; GLU-1342; HIS-1418 AND TRP-1493</scope>
</reference>
<reference key="32">
    <citation type="journal article" date="2005" name="Clin. Endocrinol. (Oxf.)">
        <title>Genotypes of the pancreatic beta-cell K-ATP channel and clinical phenotypes of Japanese patients with persistent hyperinsulinaemic hypoglycaemia of infancy.</title>
        <authorList>
            <person name="Ohkubo K."/>
            <person name="Nagashima M."/>
            <person name="Naito Y."/>
            <person name="Taguchi T."/>
            <person name="Suita S."/>
            <person name="Okamoto N."/>
            <person name="Fujinaga H."/>
            <person name="Tsumura K."/>
            <person name="Kikuchi K."/>
            <person name="Ono J."/>
        </authorList>
    </citation>
    <scope>VARIANTS HHF1 GLN-1384 AND LYS-1486</scope>
    <scope>VARIANT SER-1369</scope>
</reference>
<reference key="33">
    <citation type="journal article" date="2005" name="J. Clin. Endocrinol. Metab.">
        <title>Genotype-phenotype correlations in children with congenital hyperinsulinism due to recessive mutations of the adenosine triphosphate-sensitive potassium channel genes.</title>
        <authorList>
            <person name="Henwood M.J."/>
            <person name="Kelly A."/>
            <person name="MacMullen C."/>
            <person name="Bhatia P."/>
            <person name="Ganguly A."/>
            <person name="Thornton P.S."/>
            <person name="Stanley C.A."/>
        </authorList>
    </citation>
    <scope>VARIANTS HHF1 SER-27; TRP-74; SER-188; GLN-495; LYS-501; SER-686; TRP-1214; GLN-1214; ASN-1336; PHE-1387 DEL; HIS-1471 AND ASN-1471</scope>
</reference>
<reference key="34">
    <citation type="journal article" date="2006" name="Hum. Mol. Genet.">
        <title>A heterozygous activating mutation in the sulphonylurea receptor SUR1 (ABCC8) causes neonatal diabetes.</title>
        <authorList>
            <person name="Proks P."/>
            <person name="Arnold A.L."/>
            <person name="Bruining J."/>
            <person name="Girard C."/>
            <person name="Flanagan S.E."/>
            <person name="Larkin B."/>
            <person name="Colclough K."/>
            <person name="Hattersley A.T."/>
            <person name="Ashcroft F.M."/>
            <person name="Ellard S."/>
        </authorList>
    </citation>
    <scope>VARIANT PNDM3 LEU-132</scope>
    <scope>CHARACTERIZATION OF VARIANT PNDM3 LEU-132</scope>
</reference>
<reference key="35">
    <citation type="journal article" date="2006" name="Hum. Mutat.">
        <title>Mutation spectra of ABCC8 gene in Spanish patients with Hyperinsulinism of Infancy (HI).</title>
        <authorList>
            <person name="Fernandez-Marmiesse A."/>
            <person name="Salas A."/>
            <person name="Vega A."/>
            <person name="Fernandez-Lorenzo J.R."/>
            <person name="Barreiro J."/>
            <person name="Carracedo A."/>
        </authorList>
    </citation>
    <scope>VARIANTS HHF1 TRP-74; ARG-111; SER-188; ARG-233; ASN-310; ARG-551; THR-719; PRO-1130; ARG-1147; LYS-1295 AND PRO-1450</scope>
    <scope>VARIANTS SER-1369 AND ILE-1572</scope>
</reference>
<reference key="36">
    <citation type="journal article" date="2006" name="Mod. Pathol.">
        <title>Molecular and immunohistochemical analyses of the focal form of congenital hyperinsulinism.</title>
        <authorList>
            <person name="Suchi M."/>
            <person name="MacMullen C.M."/>
            <person name="Thornton P.S."/>
            <person name="Adzick N.S."/>
            <person name="Ganguly A."/>
            <person name="Ruchelli E.D."/>
            <person name="Stanley C.A."/>
        </authorList>
    </citation>
    <scope>VARIANTS HHF1 ARG-7; ASP-21; SER-27; TRP-74; LYS-501; PRO-503; SER-686; TRP-1214; TRP-1214; GLN-1349; ARG-1378; PHE-1387 DEL; ARG-1400 AND GLN-1493</scope>
</reference>
<reference key="37">
    <citation type="journal article" date="2006" name="N. Engl. J. Med.">
        <title>Activating mutations in the ABCC8 gene in neonatal diabetes mellitus.</title>
        <authorList>
            <person name="Babenko A.P."/>
            <person name="Polak M."/>
            <person name="Cave H."/>
            <person name="Busiah K."/>
            <person name="Czernichow P."/>
            <person name="Scharfmann R."/>
            <person name="Bryan J."/>
            <person name="Aguilar-Bryan L."/>
            <person name="Vaxillaire M."/>
            <person name="Froguel P."/>
        </authorList>
    </citation>
    <scope>VARIANTS PNDM3 ARG-213 AND VAL-1424</scope>
    <scope>VARIANTS TNDM2 ARG-435; VAL-582; TYR-1023; GLN-1182 AND CYS-1379</scope>
    <scope>CHARACTERIZATION OF VARIANT PNDM3 VAL-1424</scope>
    <scope>CHARACTERIZATION OF VARIANT TNDM2 TYR-1023</scope>
</reference>
<reference key="38">
    <citation type="journal article" date="2007" name="Am. J. Hum. Genet.">
        <title>Permanent neonatal diabetes caused by dominant, recessive, or compound heterozygous SUR1 mutations with opposite functional effects.</title>
        <authorList>
            <person name="Ellard S."/>
            <person name="Flanagan S.E."/>
            <person name="Girard C.A."/>
            <person name="Patch A.M."/>
            <person name="Harries L.W."/>
            <person name="Parrish A."/>
            <person name="Edghill E.L."/>
            <person name="Mackay D.J."/>
            <person name="Proks P."/>
            <person name="Shimomura K."/>
            <person name="Haberland H."/>
            <person name="Carson D.J."/>
            <person name="Shield J.P."/>
            <person name="Hattersley A.T."/>
            <person name="Ashcroft F.M."/>
        </authorList>
    </citation>
    <scope>VARIANTS PNDM3 LEU-45; SER-72; ALA-86; GLY-86; LEU-132; VAL-132; SER-207; LYS-208; GLU-209; LYS-211; PRO-225; ILE-229; ASP-263; LYS-382; GLU-1184; LYS-1326; ARG-1400; ALA-1523 AND LEU-1523</scope>
    <scope>CHARACTERIZATION OF VARIANTS PNDM3 LEU-132; SER-207; ILE-229; GLU-1184 AND LEU-1523</scope>
</reference>
<reference key="39">
    <citation type="journal article" date="2007" name="J. Clin. Endocrinol. Metab.">
        <title>Prevalence of permanent neonatal diabetes in Slovakia and successful replacement of insulin with sulfonylurea therapy in KCNJ11 and ABCC8 mutation carriers.</title>
        <authorList>
            <person name="Stanik J."/>
            <person name="Gasperikova D."/>
            <person name="Paskova M."/>
            <person name="Barak L."/>
            <person name="Javorkova J."/>
            <person name="Jancova E."/>
            <person name="Ciljakova M."/>
            <person name="Hlava P."/>
            <person name="Michalek J."/>
            <person name="Flanagan S.E."/>
            <person name="Pearson E."/>
            <person name="Hattersley A.T."/>
            <person name="Ellard S."/>
            <person name="Klimes I."/>
        </authorList>
    </citation>
    <scope>VARIANT PNDM3 ALA-86</scope>
</reference>
<reference key="40">
    <citation type="journal article" date="2015" name="Clin. Genet.">
        <title>Monoallelic ABCC8 mutations are a common cause of diazoxide-unresponsive diffuse form of congenital hyperinsulinism.</title>
        <authorList>
            <person name="Saint-Martin C."/>
            <person name="Zhou Q."/>
            <person name="Martin G.M."/>
            <person name="Vaury C."/>
            <person name="Leroy G."/>
            <person name="Arnoux J.B."/>
            <person name="de Lonlay P."/>
            <person name="Shyng S.L."/>
            <person name="Bellanne-Chantelot C."/>
        </authorList>
    </citation>
    <scope>VARIANTS HHF1 MET-511; ASP-716; LYS-824; THR-889; PRO-890; PRO-1352; SER-1378; PHE-1386; TYR-1388; PRO-1389; VAL-1457; ILE-1480; GLU-1505 AND SER-1511</scope>
    <scope>CHARACTERIZATION OF VARIANTS HHF1 MET-511; LYS-824; THR-889; PRO-890; SER-1378; VAL-1457; ILE-1480; GLU-1505 AND SER-1511</scope>
    <scope>FUNCTION</scope>
    <scope>SUBCELLULAR LOCATION</scope>
</reference>
<reference key="41">
    <citation type="journal article" date="2015" name="J. Pediatr. Endocrinol. Metab.">
        <title>Alternating hypoglycemia and hyperglycemia in a toddler with a homozygous p.R1419H ABCC8 mutation: an unusual clinical picture.</title>
        <authorList>
            <person name="Harel S."/>
            <person name="Cohen A.S."/>
            <person name="Hussain K."/>
            <person name="Flanagan S.E."/>
            <person name="Schlade-Bartusiak K."/>
            <person name="Patel M."/>
            <person name="Courtade J."/>
            <person name="Li J.B."/>
            <person name="Van Karnebeek C."/>
            <person name="Kurata H."/>
            <person name="Ellard S."/>
            <person name="Chanoine J.P."/>
            <person name="Gibson W.T."/>
        </authorList>
    </citation>
    <scope>VARIANT HHF1 HIS-1418</scope>
    <scope>CHARACTERIZATION OF VARIANT HHF1 HIS-1418</scope>
    <scope>FUNCTION</scope>
</reference>
<gene>
    <name type="primary">ABCC8</name>
    <name type="synonym">HRINS</name>
    <name type="synonym">SUR</name>
    <name type="synonym">SUR1</name>
</gene>
<protein>
    <recommendedName>
        <fullName>ATP-binding cassette sub-family C member 8</fullName>
    </recommendedName>
    <alternativeName>
        <fullName>Sulfonylurea receptor 1</fullName>
    </alternativeName>
</protein>
<accession>Q09428</accession>
<accession>A6NMX8</accession>
<accession>E3UYX6</accession>
<accession>O75948</accession>
<accession>Q16583</accession>
<feature type="chain" id="PRO_0000093400" description="ATP-binding cassette sub-family C member 8">
    <location>
        <begin position="1"/>
        <end position="1581"/>
    </location>
</feature>
<feature type="topological domain" description="Extracellular" evidence="44 46">
    <location>
        <begin position="1"/>
        <end position="30"/>
    </location>
</feature>
<feature type="transmembrane region" description="Helical; Name=1" evidence="27 46">
    <location>
        <begin position="31"/>
        <end position="47"/>
    </location>
</feature>
<feature type="topological domain" description="Cytoplasmic" evidence="44 46">
    <location>
        <begin position="48"/>
        <end position="72"/>
    </location>
</feature>
<feature type="transmembrane region" description="Helical; Name=2" evidence="27 46">
    <location>
        <begin position="73"/>
        <end position="89"/>
    </location>
</feature>
<feature type="topological domain" description="Extracellular" evidence="44 46">
    <location>
        <begin position="90"/>
        <end position="106"/>
    </location>
</feature>
<feature type="transmembrane region" description="Helical; Name=3" evidence="27 46">
    <location>
        <begin position="107"/>
        <end position="123"/>
    </location>
</feature>
<feature type="topological domain" description="Cytoplasmic" evidence="44 46">
    <location>
        <begin position="124"/>
        <end position="136"/>
    </location>
</feature>
<feature type="transmembrane region" description="Helical; Name=4" evidence="27 46">
    <location>
        <begin position="137"/>
        <end position="153"/>
    </location>
</feature>
<feature type="topological domain" description="Extracellular" evidence="44 46">
    <location>
        <begin position="154"/>
        <end position="169"/>
    </location>
</feature>
<feature type="transmembrane region" description="Helical; Name=5" evidence="27 46">
    <location>
        <begin position="170"/>
        <end position="186"/>
    </location>
</feature>
<feature type="topological domain" description="Cytoplasmic" evidence="44 46">
    <location>
        <begin position="187"/>
        <end position="303"/>
    </location>
</feature>
<feature type="transmembrane region" description="Helical; Name=6" evidence="27 46">
    <location>
        <begin position="304"/>
        <end position="319"/>
    </location>
</feature>
<feature type="topological domain" description="Extracellular" evidence="44 46">
    <location>
        <begin position="320"/>
        <end position="356"/>
    </location>
</feature>
<feature type="transmembrane region" description="Helical; Name=7" evidence="27 46">
    <location>
        <begin position="357"/>
        <end position="372"/>
    </location>
</feature>
<feature type="topological domain" description="Cytoplasmic" evidence="44 46">
    <location>
        <begin position="373"/>
        <end position="438"/>
    </location>
</feature>
<feature type="transmembrane region" description="Helical; Name=8" evidence="27 46">
    <location>
        <begin position="439"/>
        <end position="454"/>
    </location>
</feature>
<feature type="topological domain" description="Extracellular" evidence="44 46">
    <location>
        <begin position="455"/>
        <end position="460"/>
    </location>
</feature>
<feature type="transmembrane region" description="Helical; Name=9" evidence="27 46">
    <location>
        <begin position="461"/>
        <end position="473"/>
    </location>
</feature>
<feature type="topological domain" description="Cytoplasmic" evidence="44 46">
    <location>
        <begin position="474"/>
        <end position="541"/>
    </location>
</feature>
<feature type="transmembrane region" description="Helical; Name=10" evidence="27 46">
    <location>
        <begin position="542"/>
        <end position="557"/>
    </location>
</feature>
<feature type="topological domain" description="Extracellular" evidence="44 46">
    <location>
        <begin position="558"/>
        <end position="576"/>
    </location>
</feature>
<feature type="transmembrane region" description="Helical; Name=11" evidence="27 46">
    <location>
        <begin position="577"/>
        <end position="592"/>
    </location>
</feature>
<feature type="topological domain" description="Cytoplasmic" evidence="44 46">
    <location>
        <begin position="593"/>
        <end position="1012"/>
    </location>
</feature>
<feature type="transmembrane region" description="Helical; Name=12" evidence="27 46">
    <location>
        <begin position="1013"/>
        <end position="1030"/>
    </location>
</feature>
<feature type="topological domain" description="Extracellular" evidence="44 46">
    <location>
        <begin position="1031"/>
        <end position="1066"/>
    </location>
</feature>
<feature type="transmembrane region" description="Helical; Name=13" evidence="27 46">
    <location>
        <begin position="1067"/>
        <end position="1083"/>
    </location>
</feature>
<feature type="topological domain" description="Cytoplasmic" evidence="44 46">
    <location>
        <begin position="1084"/>
        <end position="1142"/>
    </location>
</feature>
<feature type="transmembrane region" description="Helical; Name=14" evidence="27 46">
    <location>
        <begin position="1143"/>
        <end position="1160"/>
    </location>
</feature>
<feature type="topological domain" description="Extracellular" evidence="44 46">
    <location>
        <position position="1161"/>
    </location>
</feature>
<feature type="transmembrane region" description="Helical; Name=15" evidence="27 46">
    <location>
        <begin position="1162"/>
        <end position="1174"/>
    </location>
</feature>
<feature type="topological domain" description="Cytoplasmic" evidence="44 46">
    <location>
        <begin position="1175"/>
        <end position="1248"/>
    </location>
</feature>
<feature type="transmembrane region" description="Helical; Name=16" evidence="27 46">
    <location>
        <begin position="1249"/>
        <end position="1264"/>
    </location>
</feature>
<feature type="topological domain" description="Extracellular" evidence="44 46">
    <location>
        <begin position="1265"/>
        <end position="1280"/>
    </location>
</feature>
<feature type="transmembrane region" description="Helical; Name=17" evidence="27 46">
    <location>
        <begin position="1281"/>
        <end position="1296"/>
    </location>
</feature>
<feature type="topological domain" description="Cytoplasmic" evidence="44 46">
    <location>
        <begin position="1297"/>
        <end position="1581"/>
    </location>
</feature>
<feature type="domain" description="ABC transmembrane type-1 1" evidence="3">
    <location>
        <begin position="299"/>
        <end position="602"/>
    </location>
</feature>
<feature type="domain" description="ABC transporter 1" evidence="2">
    <location>
        <begin position="679"/>
        <end position="929"/>
    </location>
</feature>
<feature type="domain" description="ABC transmembrane type-1 2" evidence="3">
    <location>
        <begin position="1012"/>
        <end position="1306"/>
    </location>
</feature>
<feature type="domain" description="ABC transporter 2" evidence="2">
    <location>
        <begin position="1344"/>
        <end position="1578"/>
    </location>
</feature>
<feature type="region of interest" description="Disordered" evidence="4">
    <location>
        <begin position="935"/>
        <end position="987"/>
    </location>
</feature>
<feature type="compositionally biased region" description="Basic and acidic residues" evidence="4">
    <location>
        <begin position="935"/>
        <end position="949"/>
    </location>
</feature>
<feature type="compositionally biased region" description="Acidic residues" evidence="4">
    <location>
        <begin position="966"/>
        <end position="984"/>
    </location>
</feature>
<feature type="binding site" evidence="27 45 46">
    <location>
        <position position="688"/>
    </location>
    <ligand>
        <name>ATP</name>
        <dbReference type="ChEBI" id="CHEBI:30616"/>
    </ligand>
</feature>
<feature type="binding site" evidence="27 45 46">
    <location>
        <position position="716"/>
    </location>
    <ligand>
        <name>ATP</name>
        <dbReference type="ChEBI" id="CHEBI:30616"/>
    </ligand>
</feature>
<feature type="binding site" evidence="27 45 46">
    <location>
        <position position="720"/>
    </location>
    <ligand>
        <name>ATP</name>
        <dbReference type="ChEBI" id="CHEBI:30616"/>
    </ligand>
</feature>
<feature type="binding site" evidence="27 45 46">
    <location>
        <position position="720"/>
    </location>
    <ligand>
        <name>Mg(2+)</name>
        <dbReference type="ChEBI" id="CHEBI:18420"/>
    </ligand>
</feature>
<feature type="binding site" evidence="27 45 46">
    <location>
        <position position="721"/>
    </location>
    <ligand>
        <name>ATP</name>
        <dbReference type="ChEBI" id="CHEBI:30616"/>
    </ligand>
</feature>
<feature type="binding site" evidence="27 45 46">
    <location>
        <position position="774"/>
    </location>
    <ligand>
        <name>Mg(2+)</name>
        <dbReference type="ChEBI" id="CHEBI:18420"/>
    </ligand>
</feature>
<feature type="binding site" evidence="27 45 46">
    <location>
        <position position="1380"/>
    </location>
    <ligand>
        <name>ADP</name>
        <dbReference type="ChEBI" id="CHEBI:456216"/>
    </ligand>
</feature>
<feature type="binding site" evidence="27 45 46">
    <location>
        <position position="1381"/>
    </location>
    <ligand>
        <name>ADP</name>
        <dbReference type="ChEBI" id="CHEBI:456216"/>
    </ligand>
</feature>
<feature type="binding site" evidence="27 45 46">
    <location>
        <position position="1383"/>
    </location>
    <ligand>
        <name>ADP</name>
        <dbReference type="ChEBI" id="CHEBI:456216"/>
    </ligand>
</feature>
<feature type="binding site" evidence="27 45 46">
    <location>
        <position position="1384"/>
    </location>
    <ligand>
        <name>ADP</name>
        <dbReference type="ChEBI" id="CHEBI:456216"/>
    </ligand>
</feature>
<feature type="binding site" evidence="27 45 46">
    <location>
        <position position="1385"/>
    </location>
    <ligand>
        <name>ADP</name>
        <dbReference type="ChEBI" id="CHEBI:456216"/>
    </ligand>
</feature>
<feature type="binding site" evidence="27 45 46">
    <location>
        <position position="1386"/>
    </location>
    <ligand>
        <name>ADP</name>
        <dbReference type="ChEBI" id="CHEBI:456216"/>
    </ligand>
</feature>
<feature type="binding site" evidence="27 45 46">
    <location>
        <position position="1482"/>
    </location>
    <ligand>
        <name>ATP</name>
        <dbReference type="ChEBI" id="CHEBI:30616"/>
    </ligand>
</feature>
<feature type="glycosylation site" description="N-linked (GlcNAc...) asparagine" evidence="1">
    <location>
        <position position="10"/>
    </location>
</feature>
<feature type="glycosylation site" description="N-linked (GlcNAc...) asparagine" evidence="1">
    <location>
        <position position="1049"/>
    </location>
</feature>
<feature type="disulfide bond" evidence="45 46">
    <location>
        <begin position="6"/>
        <end position="26"/>
    </location>
</feature>
<feature type="splice variant" id="VSP_044090" description="In isoform 3." evidence="42">
    <location>
        <begin position="51"/>
        <end position="1581"/>
    </location>
</feature>
<feature type="splice variant" id="VSP_000055" description="In isoform 2." evidence="43">
    <original>S</original>
    <variation>SS</variation>
    <location>
        <position position="740"/>
    </location>
</feature>
<feature type="sequence variant" id="VAR_031349" description="In HHF1; dbSNP:rs781059815." evidence="19">
    <original>G</original>
    <variation>R</variation>
    <location>
        <position position="7"/>
    </location>
</feature>
<feature type="sequence variant" id="VAR_031350" description="In HHF1; dbSNP:rs200670692." evidence="19">
    <original>V</original>
    <variation>D</variation>
    <location>
        <position position="21"/>
    </location>
</feature>
<feature type="sequence variant" id="VAR_031351" description="In HHF1." evidence="16 19">
    <original>F</original>
    <variation>S</variation>
    <location>
        <position position="27"/>
    </location>
</feature>
<feature type="sequence variant" id="VAR_072928" description="In PNDM3; likely pathogenic; dbSNP:rs267606623." evidence="24">
    <original>P</original>
    <variation>L</variation>
    <location>
        <position position="45"/>
    </location>
</feature>
<feature type="sequence variant" id="VAR_031352" description="In HHF1; altered intracellular trafficking." evidence="17">
    <original>G</original>
    <variation>E</variation>
    <location>
        <position position="70"/>
    </location>
</feature>
<feature type="sequence variant" id="VAR_072929" description="In PNDM3; uncertain significance; dbSNP:rs80356634." evidence="24">
    <original>N</original>
    <variation>S</variation>
    <location>
        <position position="72"/>
    </location>
</feature>
<feature type="sequence variant" id="VAR_008639" description="In HHF1; dbSNP:rs72559734." evidence="36">
    <original>R</original>
    <variation>Q</variation>
    <location>
        <position position="74"/>
    </location>
</feature>
<feature type="sequence variant" id="VAR_031353" description="In HHF1; dbSNP:rs201682634." evidence="16 19 20">
    <original>R</original>
    <variation>W</variation>
    <location>
        <position position="74"/>
    </location>
</feature>
<feature type="sequence variant" id="VAR_031354" description="In PNDM3; likely pathogenic; dbSNP:rs193929360." evidence="23 24">
    <original>V</original>
    <variation>A</variation>
    <location>
        <position position="86"/>
    </location>
</feature>
<feature type="sequence variant" id="VAR_072930" description="In PNDM3; likely pathogenic; dbSNP:rs193929360." evidence="24">
    <original>V</original>
    <variation>G</variation>
    <location>
        <position position="86"/>
    </location>
</feature>
<feature type="sequence variant" id="VAR_029777" description="In dbSNP:rs10400391.">
    <original>L</original>
    <variation>V</variation>
    <location>
        <position position="104"/>
    </location>
</feature>
<feature type="sequence variant" id="VAR_031355" description="In HHF1; altered intracellular trafficking; dbSNP:rs761749884." evidence="17 20">
    <original>G</original>
    <variation>R</variation>
    <location>
        <position position="111"/>
    </location>
</feature>
<feature type="sequence variant" id="VAR_031356" description="In HHF1; dbSNP:rs72559731." evidence="6">
    <original>A</original>
    <variation>P</variation>
    <location>
        <position position="116"/>
    </location>
</feature>
<feature type="sequence variant" id="VAR_008640" description="In HHF1; mild; dbSNP:rs60637558." evidence="36 37">
    <original>H</original>
    <variation>Q</variation>
    <location>
        <position position="125"/>
    </location>
</feature>
<feature type="sequence variant" id="VAR_029778" description="In PNDM3; pathogenic; reduces the sensitivity of the K(ATP) channel to inhibition by MgATP; increases whole-cell K(ATP) current; dbSNP:rs80356637." evidence="21 24">
    <original>F</original>
    <variation>L</variation>
    <location>
        <position position="132"/>
    </location>
</feature>
<feature type="sequence variant" id="VAR_072931" description="In PNDM3; likely pathogenic; dbSNP:rs80356637." evidence="24">
    <original>F</original>
    <variation>V</variation>
    <location>
        <position position="132"/>
    </location>
</feature>
<feature type="sequence variant" id="VAR_008641" description="In HHF1; severe; high prevalence in Finland; loss of channel activity; dbSNP:rs137852672." evidence="7 13">
    <original>V</original>
    <variation>D</variation>
    <location>
        <position position="187"/>
    </location>
</feature>
<feature type="sequence variant" id="VAR_008642" description="In HHF1; severe; dbSNP:rs797045213." evidence="16 20 36 37">
    <original>N</original>
    <variation>S</variation>
    <location>
        <position position="188"/>
    </location>
</feature>
<feature type="sequence variant" id="VAR_072932" description="In PNDM3; likely pathogenic; reduced inhibition by ATP." evidence="24">
    <original>P</original>
    <variation>S</variation>
    <location>
        <position position="207"/>
    </location>
</feature>
<feature type="sequence variant" id="VAR_072933" description="In PNDM3; dbSNP:rs2133680513." evidence="24">
    <original>E</original>
    <variation>K</variation>
    <location>
        <position position="208"/>
    </location>
</feature>
<feature type="sequence variant" id="VAR_072934" description="In PNDM3; likely pathogenic; dbSNP:rs80356640." evidence="24">
    <original>D</original>
    <variation>E</variation>
    <location>
        <position position="209"/>
    </location>
</feature>
<feature type="sequence variant" id="VAR_072935" description="In PNDM3; likely pathogenic; dbSNP:rs193929366." evidence="24">
    <original>Q</original>
    <variation>K</variation>
    <location>
        <position position="211"/>
    </location>
</feature>
<feature type="sequence variant" id="VAR_029779" description="In PNDM3; dbSNP:rs80356642." evidence="22">
    <original>L</original>
    <variation>R</variation>
    <location>
        <position position="213"/>
    </location>
</feature>
<feature type="sequence variant" id="VAR_072936" description="In PNDM3; likely pathogenic; dbSNP:rs1048095." evidence="24">
    <original>L</original>
    <variation>P</variation>
    <location>
        <position position="225"/>
    </location>
</feature>
<feature type="sequence variant" id="VAR_072937" description="In PNDM3; uncertain significance; affects channel function resulting in increased potassium currents at physiological MgATP concentrations; dbSNP:rs768017509." evidence="24">
    <original>T</original>
    <variation>I</variation>
    <location>
        <position position="229"/>
    </location>
</feature>
<feature type="sequence variant" id="VAR_031357" description="In HHF1." evidence="20">
    <original>M</original>
    <variation>R</variation>
    <location>
        <position position="233"/>
    </location>
</feature>
<feature type="sequence variant" id="VAR_072938" description="In PNDM3; dbSNP:rs778892038." evidence="24">
    <original>Y</original>
    <variation>D</variation>
    <location>
        <position position="263"/>
    </location>
</feature>
<feature type="sequence variant" id="VAR_008643" description="In dbSNP:rs185040406." evidence="34">
    <original>R</original>
    <variation>Q</variation>
    <location>
        <position position="275"/>
    </location>
</feature>
<feature type="sequence variant" id="VAR_031358" description="In HHF1; dbSNP:rs769569410." evidence="20">
    <original>D</original>
    <variation>N</variation>
    <location>
        <position position="310"/>
    </location>
</feature>
<feature type="sequence variant" id="VAR_072939" description="In PNDM3; uncertain significance; dbSNP:rs80356651." evidence="24">
    <original>E</original>
    <variation>K</variation>
    <location>
        <position position="382"/>
    </location>
</feature>
<feature type="sequence variant" id="VAR_008644" description="In HHF1; dbSNP:rs72559728." evidence="36">
    <original>N</original>
    <variation>D</variation>
    <location>
        <position position="406"/>
    </location>
</feature>
<feature type="sequence variant" id="VAR_031359" description="In HHF1; dbSNP:rs67254669." evidence="6">
    <original>C</original>
    <variation>R</variation>
    <location>
        <position position="418"/>
    </location>
</feature>
<feature type="sequence variant" id="VAR_029780" description="In TNDM2." evidence="22">
    <original>C</original>
    <variation>R</variation>
    <location>
        <position position="435"/>
    </location>
</feature>
<feature type="sequence variant" id="VAR_031360" description="In HHF1; dbSNP:rs1420601296." evidence="16">
    <original>R</original>
    <variation>Q</variation>
    <location>
        <position position="495"/>
    </location>
</feature>
<feature type="sequence variant" id="VAR_031361" description="In HHF1; dbSNP:rs372307320." evidence="16 19">
    <original>E</original>
    <variation>K</variation>
    <location>
        <position position="501"/>
    </location>
</feature>
<feature type="sequence variant" id="VAR_031362" description="In HHF1; dbSNP:rs1554933168." evidence="19">
    <original>L</original>
    <variation>P</variation>
    <location>
        <position position="503"/>
    </location>
</feature>
<feature type="sequence variant" id="VAR_031363" description="In HHF1; dbSNP:rs72559727." evidence="6">
    <original>L</original>
    <variation>P</variation>
    <location>
        <position position="508"/>
    </location>
</feature>
<feature type="sequence variant" id="VAR_072940" description="In HHF1; no effect on cell membrane expression; no effect on traffic efficiency; dramatically reduced potassium channel response to activators such as MgADP or to diazoxide." evidence="25">
    <original>L</original>
    <variation>M</variation>
    <location>
        <position position="511"/>
    </location>
</feature>
<feature type="sequence variant" id="VAR_031364" description="In HHF1; dbSNP:rs1955881024." evidence="20">
    <original>P</original>
    <variation>R</variation>
    <location>
        <position position="551"/>
    </location>
</feature>
<feature type="sequence variant" id="VAR_008645" description="In dbSNP:rs4148619." evidence="34">
    <original>V</original>
    <variation>M</variation>
    <location>
        <position position="560"/>
    </location>
</feature>
<feature type="sequence variant" id="VAR_029781" description="In TNDM2; dbSNP:rs137852674." evidence="22">
    <original>L</original>
    <variation>V</variation>
    <location>
        <position position="582"/>
    </location>
</feature>
<feature type="sequence variant" id="VAR_008646" description="In HHF1; dbSNP:rs72559726." evidence="36 37">
    <original>F</original>
    <variation>L</variation>
    <location>
        <position position="591"/>
    </location>
</feature>
<feature type="sequence variant" id="VAR_031365" description="In HHF1; dbSNP:rs58241708." evidence="6">
    <original>R</original>
    <variation>C</variation>
    <location>
        <position position="620"/>
    </location>
</feature>
<feature type="sequence variant" id="VAR_015006" description="In dbSNP:rs777986828." evidence="35">
    <original>D</original>
    <variation>N</variation>
    <location>
        <position position="673"/>
    </location>
</feature>
<feature type="sequence variant" id="VAR_031366" description="In HHF1; dbSNP:rs1159625966." evidence="16 19">
    <original>F</original>
    <variation>S</variation>
    <location>
        <position position="686"/>
    </location>
</feature>
<feature type="sequence variant" id="VAR_072941" description="In HHF1; dbSNP:rs72559723." evidence="25">
    <original>G</original>
    <variation>D</variation>
    <location>
        <position position="716"/>
    </location>
</feature>
<feature type="sequence variant" id="VAR_000100" description="In HHF1; dbSNP:rs72559723." evidence="32">
    <original>G</original>
    <variation>V</variation>
    <location>
        <position position="716"/>
    </location>
</feature>
<feature type="sequence variant" id="VAR_031367" description="In HHF1." evidence="20">
    <original>K</original>
    <variation>T</variation>
    <location>
        <position position="719"/>
    </location>
</feature>
<feature type="sequence variant" id="VAR_008647" description="In dbSNP:rs767572066." evidence="34">
    <original>D</original>
    <variation>N</variation>
    <location>
        <position position="810"/>
    </location>
</feature>
<feature type="sequence variant" id="VAR_072942" description="In HHF1; no effect on cell membrane expression; no effect on traffic efficiency; dramatically reduced potassium channel response to activators such as MgADP or to diazoxide." evidence="25">
    <original>E</original>
    <variation>K</variation>
    <location>
        <position position="824"/>
    </location>
</feature>
<feature type="sequence variant" id="VAR_008648" description="In dbSNP:rs140068774." evidence="34">
    <original>R</original>
    <variation>C</variation>
    <location>
        <position position="834"/>
    </location>
</feature>
<feature type="sequence variant" id="VAR_031368" description="In HHF1; dbSNP:rs1484689392." evidence="5">
    <original>R</original>
    <variation>G</variation>
    <location>
        <position position="841"/>
    </location>
</feature>
<feature type="sequence variant" id="VAR_031369" description="In HHF1; no effect on cell membrane expression; no effect on traffic efficiency; reduced potassium channel response to activators such as MgADP or to diazoxide; dbSNP:rs761862121." evidence="25">
    <original>K</original>
    <variation>T</variation>
    <location>
        <position position="889"/>
    </location>
</feature>
<feature type="sequence variant" id="VAR_072943" description="In HHF1; no effect on cell membrane expression; no effect on traffic efficiency; dramatically reduced potassium channel response to activators such as MgADP or to diazoxide." evidence="25">
    <original>L</original>
    <variation>P</variation>
    <location>
        <position position="890"/>
    </location>
</feature>
<feature type="sequence variant" id="VAR_031370" description="In HHF1; dbSNP:rs72559721." evidence="6">
    <original>S</original>
    <variation>F</variation>
    <location>
        <position position="956"/>
    </location>
</feature>
<feature type="sequence variant" id="VAR_029782" description="In TNDM2; overactive channel." evidence="22">
    <original>H</original>
    <variation>Y</variation>
    <location>
        <position position="1023"/>
    </location>
</feature>
<feature type="sequence variant" id="VAR_031371" description="In HHF1." evidence="20">
    <original>T</original>
    <variation>P</variation>
    <location>
        <position position="1130"/>
    </location>
</feature>
<feature type="sequence variant" id="VAR_008649" description="In HHF1; dbSNP:rs201351976." evidence="36 37">
    <original>T</original>
    <variation>M</variation>
    <location>
        <position position="1138"/>
    </location>
</feature>
<feature type="sequence variant" id="VAR_031372" description="In HHF1; dbSNP:rs1262517518." evidence="20">
    <original>L</original>
    <variation>R</variation>
    <location>
        <position position="1147"/>
    </location>
</feature>
<feature type="sequence variant" id="VAR_029783" description="In TNDM2; dbSNP:rs193922400." evidence="22">
    <original>R</original>
    <variation>Q</variation>
    <location>
        <position position="1182"/>
    </location>
</feature>
<feature type="sequence variant" id="VAR_072944" description="In PNDM3; uncertain significance; slightly reduced inhibition by ATP; dbSNP:rs137852675." evidence="24">
    <original>A</original>
    <variation>E</variation>
    <location>
        <position position="1184"/>
    </location>
</feature>
<feature type="sequence variant" id="VAR_008650" description="In HHF1; severe; dbSNP:rs367850779." evidence="16 36 37">
    <original>R</original>
    <variation>Q</variation>
    <location>
        <position position="1214"/>
    </location>
</feature>
<feature type="sequence variant" id="VAR_031373" description="In HHF1; dbSNP:rs139964066." evidence="16 19">
    <original>R</original>
    <variation>W</variation>
    <location>
        <position position="1214"/>
    </location>
</feature>
<feature type="sequence variant" id="VAR_031374" description="In HHF1; dbSNP:rs542157938." evidence="20">
    <original>N</original>
    <variation>K</variation>
    <location>
        <position position="1295"/>
    </location>
</feature>
<feature type="sequence variant" id="VAR_072945" description="In PNDM3; associated in cis with A-1523; uncertain significance; dbSNP:rs200563930." evidence="24">
    <original>E</original>
    <variation>K</variation>
    <location>
        <position position="1326"/>
    </location>
</feature>
<feature type="sequence variant" id="VAR_031375" description="In HHF1; dbSNP:rs67767715." evidence="16">
    <original>K</original>
    <variation>N</variation>
    <location>
        <position position="1336"/>
    </location>
</feature>
<feature type="sequence variant" id="VAR_031376" description="In HHF1; altered intracellular trafficking." evidence="17">
    <original>G</original>
    <variation>E</variation>
    <location>
        <position position="1342"/>
    </location>
</feature>
<feature type="sequence variant" id="VAR_031377" description="In HHF1." evidence="19">
    <original>L</original>
    <variation>Q</variation>
    <location>
        <position position="1349"/>
    </location>
</feature>
<feature type="sequence variant" id="VAR_029784" description="In LIH; partially impairs ATP-dependent potassium channel function; dbSNP:rs28936370." evidence="15">
    <original>R</original>
    <variation>H</variation>
    <location>
        <position position="1352"/>
    </location>
</feature>
<feature type="sequence variant" id="VAR_008537" description="In HHF1; dbSNP:rs28936370." evidence="25 38">
    <original>R</original>
    <variation>P</variation>
    <location>
        <position position="1352"/>
    </location>
</feature>
<feature type="sequence variant" id="VAR_008651" evidence="33">
    <original>V</original>
    <variation>G</variation>
    <location>
        <position position="1360"/>
    </location>
</feature>
<feature type="sequence variant" id="VAR_015007" description="In HHF1; dbSNP:rs1953962707." evidence="6">
    <original>V</original>
    <variation>M</variation>
    <location>
        <position position="1360"/>
    </location>
</feature>
<feature type="sequence variant" id="VAR_008652" description="In dbSNP:rs757110." evidence="8 9 18 20 29 30 33 34 35 39 40 41">
    <original>A</original>
    <variation>S</variation>
    <location>
        <position position="1369"/>
    </location>
</feature>
<feature type="sequence variant" id="VAR_008653" description="In HHF1; dbSNP:rs925231098." evidence="19 36">
    <original>G</original>
    <variation>R</variation>
    <location>
        <position position="1378"/>
    </location>
</feature>
<feature type="sequence variant" id="VAR_072946" description="In HHF1; highly decreases cell membrane expression; highly reduced traffic efficiency; dramatically reduced potassium channel response to activators such as MgADP or to diazoxide; dbSNP:rs925231098." evidence="25">
    <original>G</original>
    <variation>S</variation>
    <location>
        <position position="1378"/>
    </location>
</feature>
<feature type="sequence variant" id="VAR_029785" description="In TNDM2; dbSNP:rs137852673." evidence="22">
    <original>R</original>
    <variation>C</variation>
    <location>
        <position position="1379"/>
    </location>
</feature>
<feature type="sequence variant" id="VAR_008654" description="In HHF1; dbSNP:rs773448052." evidence="36 37">
    <original>G</original>
    <variation>S</variation>
    <location>
        <position position="1381"/>
    </location>
</feature>
<feature type="sequence variant" id="VAR_031378" description="In HHF1." evidence="18">
    <original>K</original>
    <variation>Q</variation>
    <location>
        <position position="1384"/>
    </location>
</feature>
<feature type="sequence variant" id="VAR_029786" description="In HHF1; does not alter surface expression but channels are not functional; dbSNP:rs387906408." evidence="14">
    <location>
        <position position="1385"/>
    </location>
</feature>
<feature type="sequence variant" id="VAR_031379" description="In HHF1; dbSNP:rs72559718." evidence="25">
    <original>S</original>
    <variation>F</variation>
    <location>
        <position position="1386"/>
    </location>
</feature>
<feature type="sequence variant" id="VAR_008538" description="In HHF1; severe; high frequency in Ashkenazi Jewish patients; defective trafficking and lack of surface expression." evidence="11 16 19 33 36 37">
    <location>
        <position position="1387"/>
    </location>
</feature>
<feature type="sequence variant" id="VAR_072947" description="In HHF1." evidence="25">
    <original>S</original>
    <variation>Y</variation>
    <location>
        <position position="1388"/>
    </location>
</feature>
<feature type="sequence variant" id="VAR_072948" description="In HHF1." evidence="25">
    <original>L</original>
    <variation>P</variation>
    <location>
        <position position="1389"/>
    </location>
</feature>
<feature type="sequence variant" id="VAR_008655" description="In HHF1; severe; loss of channel activity; dbSNP:rs769279368." evidence="36 37">
    <original>R</original>
    <variation>H</variation>
    <location>
        <position position="1393"/>
    </location>
</feature>
<feature type="sequence variant" id="VAR_031380" description="In HHF1 and PNDM3; dbSNP:rs137852676." evidence="19 24">
    <original>G</original>
    <variation>R</variation>
    <location>
        <position position="1400"/>
    </location>
</feature>
<feature type="sequence variant" id="VAR_031381" description="In HHF1; altered intracellular trafficking; dbSNP:rs1446306735." evidence="17 26">
    <original>R</original>
    <variation>H</variation>
    <location>
        <position position="1418"/>
    </location>
</feature>
<feature type="sequence variant" id="VAR_008539" description="In HHF1; modest impairment of channel function; dbSNP:rs28938469." evidence="5 9 38">
    <original>R</original>
    <variation>C</variation>
    <location>
        <position position="1420"/>
    </location>
</feature>
<feature type="sequence variant" id="VAR_029787" description="In PNDM3; overactive channel; dbSNP:rs80356653." evidence="22">
    <original>I</original>
    <variation>V</variation>
    <location>
        <position position="1424"/>
    </location>
</feature>
<feature type="sequence variant" id="VAR_015008" description="In HHF1; cannot form a functional channel, due to protein instability or defective transport to the membrane; dbSNP:rs387906407." evidence="9">
    <original>R</original>
    <variation>Q</variation>
    <location>
        <position position="1436"/>
    </location>
</feature>
<feature type="sequence variant" id="VAR_031382" description="In HHF1; dbSNP:rs1554904565." evidence="20">
    <original>L</original>
    <variation>P</variation>
    <location>
        <position position="1450"/>
    </location>
</feature>
<feature type="sequence variant" id="VAR_031383" description="In HHF1; dbSNP:rs72559717." evidence="13">
    <original>A</original>
    <variation>T</variation>
    <location>
        <position position="1457"/>
    </location>
</feature>
<feature type="sequence variant" id="VAR_072949" description="In HHF1; dbSNP:rs2133398429." evidence="25">
    <original>A</original>
    <variation>V</variation>
    <location>
        <position position="1457"/>
    </location>
</feature>
<feature type="sequence variant" id="VAR_031384" description="In HHF1; dbSNP:rs72559716." evidence="16">
    <original>D</original>
    <variation>H</variation>
    <location>
        <position position="1471"/>
    </location>
</feature>
<feature type="sequence variant" id="VAR_031385" description="In HHF1; dbSNP:rs72559716." evidence="16">
    <original>D</original>
    <variation>N</variation>
    <location>
        <position position="1471"/>
    </location>
</feature>
<feature type="sequence variant" id="VAR_008656" description="In HHF1; channels insensitive to metabolic inhibition and to activation by ADP; dbSNP:rs72559715." evidence="31">
    <original>G</original>
    <variation>R</variation>
    <location>
        <position position="1478"/>
    </location>
</feature>
<feature type="sequence variant" id="VAR_072950" description="In HHF1; no effect on cell membrane expression; no effect on traffic efficiency; dramatically reduced potassium channel response to activators such as MgADP or to diazoxide." evidence="25">
    <original>N</original>
    <variation>I</variation>
    <location>
        <position position="1480"/>
    </location>
</feature>
<feature type="sequence variant" id="VAR_031386" description="In HHF1." evidence="18">
    <original>R</original>
    <variation>K</variation>
    <location>
        <position position="1486"/>
    </location>
</feature>
<feature type="sequence variant" id="VAR_031387" description="In HHF1; dbSNP:rs746480424." evidence="19">
    <original>R</original>
    <variation>Q</variation>
    <location>
        <position position="1493"/>
    </location>
</feature>
<feature type="sequence variant" id="VAR_008540" description="In HHF1; altered intracellular trafficking; dbSNP:rs28936371." evidence="5 17 38">
    <original>R</original>
    <variation>W</variation>
    <location>
        <position position="1493"/>
    </location>
</feature>
<feature type="sequence variant" id="VAR_072951" description="In HHF1; no effect on cell membrane expression; no effect on traffic efficiency; dramatically reduced potassium channel response to activators such as MgADP or to diazoxide; dbSNP:rs751591418." evidence="25">
    <original>D</original>
    <variation>E</variation>
    <location>
        <position position="1505"/>
    </location>
</feature>
<feature type="sequence variant" id="VAR_015009" description="In HHF1; mild; dominantly inherited; channels insensitive to metabolic inhibition and to activation by ADP; dbSNP:rs137852671." evidence="10 13">
    <original>E</original>
    <variation>K</variation>
    <location>
        <position position="1506"/>
    </location>
</feature>
<feature type="sequence variant" id="VAR_008657" description="In HHF1.">
    <original>A</original>
    <variation>AAS</variation>
    <location>
        <position position="1507"/>
    </location>
</feature>
<feature type="sequence variant" id="VAR_072952" description="In HHF1; no effect on cell membrane expression; no effect on traffic efficiency; dramatically reduced potassium channel response to activators such as MgADP or to diazoxide." evidence="25">
    <original>I</original>
    <variation>S</variation>
    <location>
        <position position="1511"/>
    </location>
</feature>
<feature type="sequence variant" id="VAR_088691" description="In PNDM3; associated in cis with K-1326; uncertain significance; dbSNP:rs1953754020." evidence="24">
    <original>V</original>
    <variation>A</variation>
    <location>
        <position position="1523"/>
    </location>
</feature>
<feature type="sequence variant" id="VAR_088692" description="In PNDM3; uncertain significance; affects channel function resulting in increased potassium currents at physiological MgATP concentrations." evidence="24">
    <original>V</original>
    <variation>L</variation>
    <location>
        <position position="1523"/>
    </location>
</feature>
<feature type="sequence variant" id="VAR_015010" description="In HHF1; reduced channels surface expression and response to ADP; dbSNP:rs72559713." evidence="12">
    <original>L</original>
    <variation>P</variation>
    <location>
        <position position="1543"/>
    </location>
</feature>
<feature type="sequence variant" id="VAR_031388" description="In HHF1; dbSNP:rs1221760584." evidence="13">
    <original>V</original>
    <variation>D</variation>
    <location>
        <position position="1550"/>
    </location>
</feature>
<feature type="sequence variant" id="VAR_031389" description="In HHF1; dbSNP:rs1320740169." evidence="13">
    <original>L</original>
    <variation>V</variation>
    <location>
        <position position="1551"/>
    </location>
</feature>
<feature type="sequence variant" id="VAR_008658" description="In dbSNP:rs8192690." evidence="8 20 33">
    <original>V</original>
    <variation>I</variation>
    <location>
        <position position="1572"/>
    </location>
</feature>
<feature type="sequence conflict" description="In Ref. 2; AAB02278/AAB02417/AAB02418." evidence="43" ref="2">
    <original>A</original>
    <variation>V</variation>
    <location>
        <position position="30"/>
    </location>
</feature>
<feature type="sequence conflict" description="In Ref. 3; AAB36699/AAB36700." evidence="43" ref="3">
    <original>F</original>
    <variation>L</variation>
    <location>
        <position position="157"/>
    </location>
</feature>
<feature type="sequence conflict" description="In Ref. 2; AAB02278/AAB02417/AAB02418." evidence="43" ref="2">
    <original>G</original>
    <variation>A</variation>
    <location>
        <position position="163"/>
    </location>
</feature>
<feature type="sequence conflict" description="In Ref. 2; AAB02278/AAB02417/AAB02418." evidence="43" ref="2">
    <original>L</original>
    <variation>V</variation>
    <location>
        <position position="167"/>
    </location>
</feature>
<feature type="sequence conflict" description="In Ref. 3; AAB36699/AAB36700." evidence="43" ref="3">
    <original>A</original>
    <variation>V</variation>
    <location>
        <position position="256"/>
    </location>
</feature>
<feature type="sequence conflict" description="In Ref. 2; AAB02278/AAB02417/AAB02418." evidence="43" ref="2">
    <original>S</original>
    <variation>T</variation>
    <location>
        <position position="487"/>
    </location>
</feature>
<feature type="sequence conflict" description="In Ref. 2; AAB02278/AAB02417/AAB02418." evidence="43" ref="2">
    <original>VL</original>
    <variation>AV</variation>
    <location>
        <begin position="1069"/>
        <end position="1070"/>
    </location>
</feature>
<feature type="sequence conflict" description="In Ref. 3; AAB36699/AAB36700." evidence="43" ref="3">
    <original>I</original>
    <variation>V</variation>
    <location>
        <position position="1172"/>
    </location>
</feature>
<feature type="sequence conflict" description="In Ref. 3; AAB36699/AAB36700." evidence="43" ref="3">
    <original>A</original>
    <variation>R</variation>
    <location>
        <position position="1410"/>
    </location>
</feature>
<feature type="sequence conflict" description="In Ref. 3; AAB36699/AAB36700." evidence="43" ref="3">
    <original>R</original>
    <variation>P</variation>
    <location>
        <position position="1418"/>
    </location>
</feature>
<feature type="strand" evidence="53">
    <location>
        <begin position="12"/>
        <end position="15"/>
    </location>
</feature>
<feature type="strand" evidence="53">
    <location>
        <begin position="21"/>
        <end position="23"/>
    </location>
</feature>
<feature type="strand" evidence="53">
    <location>
        <begin position="25"/>
        <end position="28"/>
    </location>
</feature>
<feature type="turn" evidence="53">
    <location>
        <begin position="29"/>
        <end position="31"/>
    </location>
</feature>
<feature type="helix" evidence="53">
    <location>
        <begin position="34"/>
        <end position="49"/>
    </location>
</feature>
<feature type="helix" evidence="53">
    <location>
        <begin position="71"/>
        <end position="98"/>
    </location>
</feature>
<feature type="strand" evidence="53">
    <location>
        <begin position="99"/>
        <end position="101"/>
    </location>
</feature>
<feature type="turn" evidence="53">
    <location>
        <begin position="104"/>
        <end position="107"/>
    </location>
</feature>
<feature type="helix" evidence="53">
    <location>
        <begin position="108"/>
        <end position="128"/>
    </location>
</feature>
<feature type="turn" evidence="53">
    <location>
        <begin position="129"/>
        <end position="131"/>
    </location>
</feature>
<feature type="helix" evidence="53">
    <location>
        <begin position="133"/>
        <end position="136"/>
    </location>
</feature>
<feature type="helix" evidence="53">
    <location>
        <begin position="137"/>
        <end position="155"/>
    </location>
</feature>
<feature type="strand" evidence="53">
    <location>
        <begin position="164"/>
        <end position="166"/>
    </location>
</feature>
<feature type="helix" evidence="53">
    <location>
        <begin position="167"/>
        <end position="190"/>
    </location>
</feature>
<feature type="turn" evidence="53">
    <location>
        <begin position="208"/>
        <end position="214"/>
    </location>
</feature>
<feature type="helix" evidence="53">
    <location>
        <begin position="224"/>
        <end position="228"/>
    </location>
</feature>
<feature type="helix" evidence="53">
    <location>
        <begin position="231"/>
        <end position="233"/>
    </location>
</feature>
<feature type="helix" evidence="53">
    <location>
        <begin position="234"/>
        <end position="238"/>
    </location>
</feature>
<feature type="turn" evidence="53">
    <location>
        <begin position="239"/>
        <end position="242"/>
    </location>
</feature>
<feature type="turn" evidence="53">
    <location>
        <begin position="247"/>
        <end position="249"/>
    </location>
</feature>
<feature type="strand" evidence="53">
    <location>
        <begin position="250"/>
        <end position="252"/>
    </location>
</feature>
<feature type="helix" evidence="53">
    <location>
        <begin position="259"/>
        <end position="271"/>
    </location>
</feature>
<feature type="helix" evidence="53">
    <location>
        <begin position="285"/>
        <end position="294"/>
    </location>
</feature>
<feature type="helix" evidence="53">
    <location>
        <begin position="296"/>
        <end position="313"/>
    </location>
</feature>
<feature type="helix" evidence="53">
    <location>
        <begin position="316"/>
        <end position="327"/>
    </location>
</feature>
<feature type="turn" evidence="53">
    <location>
        <begin position="349"/>
        <end position="353"/>
    </location>
</feature>
<feature type="helix" evidence="53">
    <location>
        <begin position="356"/>
        <end position="399"/>
    </location>
</feature>
<feature type="turn" evidence="53">
    <location>
        <begin position="404"/>
        <end position="407"/>
    </location>
</feature>
<feature type="strand" evidence="53">
    <location>
        <begin position="408"/>
        <end position="411"/>
    </location>
</feature>
<feature type="helix" evidence="53">
    <location>
        <begin position="414"/>
        <end position="422"/>
    </location>
</feature>
<feature type="helix" evidence="53">
    <location>
        <begin position="424"/>
        <end position="431"/>
    </location>
</feature>
<feature type="turn" evidence="53">
    <location>
        <begin position="432"/>
        <end position="434"/>
    </location>
</feature>
<feature type="helix" evidence="53">
    <location>
        <begin position="435"/>
        <end position="455"/>
    </location>
</feature>
<feature type="helix" evidence="53">
    <location>
        <begin position="459"/>
        <end position="462"/>
    </location>
</feature>
<feature type="helix" evidence="53">
    <location>
        <begin position="465"/>
        <end position="503"/>
    </location>
</feature>
<feature type="helix" evidence="53">
    <location>
        <begin position="506"/>
        <end position="509"/>
    </location>
</feature>
<feature type="turn" evidence="53">
    <location>
        <begin position="510"/>
        <end position="513"/>
    </location>
</feature>
<feature type="helix" evidence="53">
    <location>
        <begin position="515"/>
        <end position="563"/>
    </location>
</feature>
<feature type="helix" evidence="53">
    <location>
        <begin position="573"/>
        <end position="585"/>
    </location>
</feature>
<feature type="strand" evidence="53">
    <location>
        <begin position="587"/>
        <end position="589"/>
    </location>
</feature>
<feature type="helix" evidence="53">
    <location>
        <begin position="590"/>
        <end position="599"/>
    </location>
</feature>
<feature type="turn" evidence="53">
    <location>
        <begin position="600"/>
        <end position="604"/>
    </location>
</feature>
<feature type="helix" evidence="53">
    <location>
        <begin position="605"/>
        <end position="614"/>
    </location>
</feature>
<feature type="strand" evidence="53">
    <location>
        <begin position="677"/>
        <end position="679"/>
    </location>
</feature>
<feature type="strand" evidence="53">
    <location>
        <begin position="682"/>
        <end position="692"/>
    </location>
</feature>
<feature type="strand" evidence="53">
    <location>
        <begin position="695"/>
        <end position="699"/>
    </location>
</feature>
<feature type="strand" evidence="53">
    <location>
        <begin position="707"/>
        <end position="712"/>
    </location>
</feature>
<feature type="helix" evidence="53">
    <location>
        <begin position="719"/>
        <end position="726"/>
    </location>
</feature>
<feature type="strand" evidence="53">
    <location>
        <begin position="730"/>
        <end position="732"/>
    </location>
</feature>
<feature type="strand" evidence="53">
    <location>
        <begin position="734"/>
        <end position="736"/>
    </location>
</feature>
<feature type="strand" evidence="53">
    <location>
        <begin position="770"/>
        <end position="772"/>
    </location>
</feature>
<feature type="helix" evidence="53">
    <location>
        <begin position="785"/>
        <end position="788"/>
    </location>
</feature>
<feature type="helix" evidence="53">
    <location>
        <begin position="795"/>
        <end position="804"/>
    </location>
</feature>
<feature type="helix" evidence="53">
    <location>
        <begin position="808"/>
        <end position="813"/>
    </location>
</feature>
<feature type="strand" evidence="53">
    <location>
        <begin position="814"/>
        <end position="816"/>
    </location>
</feature>
<feature type="helix" evidence="53">
    <location>
        <begin position="817"/>
        <end position="819"/>
    </location>
</feature>
<feature type="strand" evidence="53">
    <location>
        <begin position="822"/>
        <end position="827"/>
    </location>
</feature>
<feature type="helix" evidence="53">
    <location>
        <begin position="831"/>
        <end position="842"/>
    </location>
</feature>
<feature type="strand" evidence="53">
    <location>
        <begin position="848"/>
        <end position="852"/>
    </location>
</feature>
<feature type="strand" evidence="53">
    <location>
        <begin position="856"/>
        <end position="858"/>
    </location>
</feature>
<feature type="helix" evidence="53">
    <location>
        <begin position="861"/>
        <end position="869"/>
    </location>
</feature>
<feature type="turn" evidence="53">
    <location>
        <begin position="870"/>
        <end position="880"/>
    </location>
</feature>
<feature type="strand" evidence="53">
    <location>
        <begin position="882"/>
        <end position="886"/>
    </location>
</feature>
<feature type="helix" evidence="53">
    <location>
        <begin position="890"/>
        <end position="895"/>
    </location>
</feature>
<feature type="strand" evidence="53">
    <location>
        <begin position="897"/>
        <end position="903"/>
    </location>
</feature>
<feature type="strand" evidence="53">
    <location>
        <begin position="906"/>
        <end position="911"/>
    </location>
</feature>
<feature type="helix" evidence="53">
    <location>
        <begin position="913"/>
        <end position="918"/>
    </location>
</feature>
<feature type="helix" evidence="53">
    <location>
        <begin position="923"/>
        <end position="928"/>
    </location>
</feature>
<feature type="turn" evidence="53">
    <location>
        <begin position="929"/>
        <end position="932"/>
    </location>
</feature>
<feature type="helix" evidence="53">
    <location>
        <begin position="998"/>
        <end position="1005"/>
    </location>
</feature>
<feature type="helix" evidence="53">
    <location>
        <begin position="1009"/>
        <end position="1016"/>
    </location>
</feature>
<feature type="turn" evidence="53">
    <location>
        <begin position="1017"/>
        <end position="1019"/>
    </location>
</feature>
<feature type="helix" evidence="53">
    <location>
        <begin position="1020"/>
        <end position="1031"/>
    </location>
</feature>
<feature type="turn" evidence="53">
    <location>
        <begin position="1032"/>
        <end position="1036"/>
    </location>
</feature>
<feature type="helix" evidence="53">
    <location>
        <begin position="1037"/>
        <end position="1040"/>
    </location>
</feature>
<feature type="turn" evidence="53">
    <location>
        <begin position="1062"/>
        <end position="1067"/>
    </location>
</feature>
<feature type="helix" evidence="53">
    <location>
        <begin position="1068"/>
        <end position="1071"/>
    </location>
</feature>
<feature type="helix" evidence="53">
    <location>
        <begin position="1072"/>
        <end position="1074"/>
    </location>
</feature>
<feature type="helix" evidence="53">
    <location>
        <begin position="1076"/>
        <end position="1105"/>
    </location>
</feature>
<feature type="helix" evidence="53">
    <location>
        <begin position="1109"/>
        <end position="1114"/>
    </location>
</feature>
<feature type="helix" evidence="53">
    <location>
        <begin position="1117"/>
        <end position="1125"/>
    </location>
</feature>
<feature type="helix" evidence="53">
    <location>
        <begin position="1127"/>
        <end position="1133"/>
    </location>
</feature>
<feature type="helix" evidence="53">
    <location>
        <begin position="1135"/>
        <end position="1153"/>
    </location>
</feature>
<feature type="turn" evidence="53">
    <location>
        <begin position="1154"/>
        <end position="1158"/>
    </location>
</feature>
<feature type="helix" evidence="53">
    <location>
        <begin position="1162"/>
        <end position="1165"/>
    </location>
</feature>
<feature type="helix" evidence="53">
    <location>
        <begin position="1168"/>
        <end position="1189"/>
    </location>
</feature>
<feature type="turn" evidence="53">
    <location>
        <begin position="1190"/>
        <end position="1195"/>
    </location>
</feature>
<feature type="helix" evidence="53">
    <location>
        <begin position="1196"/>
        <end position="1208"/>
    </location>
</feature>
<feature type="helix" evidence="53">
    <location>
        <begin position="1210"/>
        <end position="1215"/>
    </location>
</feature>
<feature type="helix" evidence="53">
    <location>
        <begin position="1219"/>
        <end position="1271"/>
    </location>
</feature>
<feature type="helix" evidence="53">
    <location>
        <begin position="1278"/>
        <end position="1293"/>
    </location>
</feature>
<feature type="helix" evidence="53">
    <location>
        <begin position="1295"/>
        <end position="1318"/>
    </location>
</feature>
<feature type="turn" evidence="53">
    <location>
        <begin position="1331"/>
        <end position="1333"/>
    </location>
</feature>
<feature type="strand" evidence="53">
    <location>
        <begin position="1345"/>
        <end position="1350"/>
    </location>
</feature>
<feature type="strand" evidence="53">
    <location>
        <begin position="1363"/>
        <end position="1367"/>
    </location>
</feature>
<feature type="strand" evidence="53">
    <location>
        <begin position="1375"/>
        <end position="1378"/>
    </location>
</feature>
<feature type="helix" evidence="53">
    <location>
        <begin position="1384"/>
        <end position="1389"/>
    </location>
</feature>
<feature type="turn" evidence="53">
    <location>
        <begin position="1390"/>
        <end position="1393"/>
    </location>
</feature>
<feature type="strand" evidence="53">
    <location>
        <begin position="1399"/>
        <end position="1404"/>
    </location>
</feature>
<feature type="strand" evidence="53">
    <location>
        <begin position="1407"/>
        <end position="1412"/>
    </location>
</feature>
<feature type="helix" evidence="53">
    <location>
        <begin position="1414"/>
        <end position="1417"/>
    </location>
</feature>
<feature type="helix" evidence="53">
    <location>
        <begin position="1418"/>
        <end position="1420"/>
    </location>
</feature>
<feature type="strand" evidence="53">
    <location>
        <begin position="1421"/>
        <end position="1424"/>
    </location>
</feature>
<feature type="strand" evidence="53">
    <location>
        <begin position="1432"/>
        <end position="1434"/>
    </location>
</feature>
<feature type="helix" evidence="53">
    <location>
        <begin position="1435"/>
        <end position="1439"/>
    </location>
</feature>
<feature type="helix" evidence="53">
    <location>
        <begin position="1449"/>
        <end position="1455"/>
    </location>
</feature>
<feature type="turn" evidence="53">
    <location>
        <begin position="1456"/>
        <end position="1458"/>
    </location>
</feature>
<feature type="helix" evidence="53">
    <location>
        <begin position="1460"/>
        <end position="1463"/>
    </location>
</feature>
<feature type="strand" evidence="53">
    <location>
        <begin position="1466"/>
        <end position="1471"/>
    </location>
</feature>
<feature type="helix" evidence="53">
    <location>
        <begin position="1476"/>
        <end position="1478"/>
    </location>
</feature>
<feature type="helix" evidence="53">
    <location>
        <begin position="1484"/>
        <end position="1495"/>
    </location>
</feature>
<feature type="strand" evidence="53">
    <location>
        <begin position="1500"/>
        <end position="1506"/>
    </location>
</feature>
<feature type="helix" evidence="53">
    <location>
        <begin position="1507"/>
        <end position="1509"/>
    </location>
</feature>
<feature type="helix" evidence="53">
    <location>
        <begin position="1513"/>
        <end position="1526"/>
    </location>
</feature>
<feature type="strand" evidence="53">
    <location>
        <begin position="1528"/>
        <end position="1535"/>
    </location>
</feature>
<feature type="strand" evidence="53">
    <location>
        <begin position="1545"/>
        <end position="1560"/>
    </location>
</feature>
<feature type="helix" evidence="53">
    <location>
        <begin position="1562"/>
        <end position="1566"/>
    </location>
</feature>
<feature type="strand" evidence="53">
    <location>
        <begin position="1568"/>
        <end position="1571"/>
    </location>
</feature>
<feature type="helix" evidence="53">
    <location>
        <begin position="1572"/>
        <end position="1576"/>
    </location>
</feature>
<feature type="turn" evidence="53">
    <location>
        <begin position="1577"/>
        <end position="1580"/>
    </location>
</feature>
<organism>
    <name type="scientific">Homo sapiens</name>
    <name type="common">Human</name>
    <dbReference type="NCBI Taxonomy" id="9606"/>
    <lineage>
        <taxon>Eukaryota</taxon>
        <taxon>Metazoa</taxon>
        <taxon>Chordata</taxon>
        <taxon>Craniata</taxon>
        <taxon>Vertebrata</taxon>
        <taxon>Euteleostomi</taxon>
        <taxon>Mammalia</taxon>
        <taxon>Eutheria</taxon>
        <taxon>Euarchontoglires</taxon>
        <taxon>Primates</taxon>
        <taxon>Haplorrhini</taxon>
        <taxon>Catarrhini</taxon>
        <taxon>Hominidae</taxon>
        <taxon>Homo</taxon>
    </lineage>
</organism>